<evidence type="ECO:0000255" key="1">
    <source>
        <dbReference type="HAMAP-Rule" id="MF_00508"/>
    </source>
</evidence>
<evidence type="ECO:0000269" key="2">
    <source>
    </source>
</evidence>
<evidence type="ECO:0000269" key="3">
    <source>
    </source>
</evidence>
<evidence type="ECO:0000269" key="4">
    <source>
    </source>
</evidence>
<evidence type="ECO:0000269" key="5">
    <source>
    </source>
</evidence>
<evidence type="ECO:0000269" key="6">
    <source>
    </source>
</evidence>
<evidence type="ECO:0000269" key="7">
    <source>
    </source>
</evidence>
<evidence type="ECO:0000269" key="8">
    <source>
    </source>
</evidence>
<evidence type="ECO:0000269" key="9">
    <source>
    </source>
</evidence>
<evidence type="ECO:0000269" key="10">
    <source>
    </source>
</evidence>
<evidence type="ECO:0000269" key="11">
    <source>
    </source>
</evidence>
<evidence type="ECO:0000269" key="12">
    <source>
    </source>
</evidence>
<evidence type="ECO:0000269" key="13">
    <source>
    </source>
</evidence>
<evidence type="ECO:0000269" key="14">
    <source>
    </source>
</evidence>
<evidence type="ECO:0000269" key="15">
    <source>
    </source>
</evidence>
<evidence type="ECO:0000269" key="16">
    <source>
    </source>
</evidence>
<evidence type="ECO:0000269" key="17">
    <source>
    </source>
</evidence>
<evidence type="ECO:0000303" key="18">
    <source>
    </source>
</evidence>
<evidence type="ECO:0000305" key="19"/>
<evidence type="ECO:0007744" key="20">
    <source>
        <dbReference type="PDB" id="3D3B"/>
    </source>
</evidence>
<evidence type="ECO:0007744" key="21">
    <source>
        <dbReference type="PDB" id="3D3C"/>
    </source>
</evidence>
<evidence type="ECO:0007744" key="22">
    <source>
        <dbReference type="PDB" id="4V47"/>
    </source>
</evidence>
<evidence type="ECO:0007744" key="23">
    <source>
        <dbReference type="PDB" id="4V4Q"/>
    </source>
</evidence>
<evidence type="ECO:0007744" key="24">
    <source>
        <dbReference type="PDB" id="5H5U"/>
    </source>
</evidence>
<evidence type="ECO:0007744" key="25">
    <source>
        <dbReference type="PDB" id="5MDV"/>
    </source>
</evidence>
<evidence type="ECO:0007744" key="26">
    <source>
        <dbReference type="PDB" id="5MDW"/>
    </source>
</evidence>
<evidence type="ECO:0007744" key="27">
    <source>
        <dbReference type="PDB" id="5MDY"/>
    </source>
</evidence>
<evidence type="ECO:0007744" key="28">
    <source>
        <dbReference type="PDB" id="5MDZ"/>
    </source>
</evidence>
<evidence type="ECO:0007744" key="29">
    <source>
        <dbReference type="PDB" id="5MGP"/>
    </source>
</evidence>
<evidence type="ECO:0007744" key="30">
    <source>
        <dbReference type="PDB" id="5U4I"/>
    </source>
</evidence>
<evidence type="ECO:0007744" key="31">
    <source>
        <dbReference type="PDB" id="6TQN"/>
    </source>
</evidence>
<evidence type="ECO:0007744" key="32">
    <source>
        <dbReference type="PDB" id="6TQO"/>
    </source>
</evidence>
<evidence type="ECO:0007829" key="33">
    <source>
        <dbReference type="PDB" id="3D3B"/>
    </source>
</evidence>
<evidence type="ECO:0007829" key="34">
    <source>
        <dbReference type="PDB" id="7OE0"/>
    </source>
</evidence>
<evidence type="ECO:0007829" key="35">
    <source>
        <dbReference type="PDB" id="8CF1"/>
    </source>
</evidence>
<evidence type="ECO:0007829" key="36">
    <source>
        <dbReference type="PDB" id="8K4E"/>
    </source>
</evidence>
<organism>
    <name type="scientific">Escherichia coli (strain K12)</name>
    <dbReference type="NCBI Taxonomy" id="83333"/>
    <lineage>
        <taxon>Bacteria</taxon>
        <taxon>Pseudomonadati</taxon>
        <taxon>Pseudomonadota</taxon>
        <taxon>Gammaproteobacteria</taxon>
        <taxon>Enterobacterales</taxon>
        <taxon>Enterobacteriaceae</taxon>
        <taxon>Escherichia</taxon>
    </lineage>
</organism>
<gene>
    <name type="primary">rpsJ</name>
    <name type="synonym">nusE</name>
    <name type="ordered locus">b3321</name>
    <name type="ordered locus">JW3283</name>
</gene>
<proteinExistence type="evidence at protein level"/>
<keyword id="KW-0002">3D-structure</keyword>
<keyword id="KW-0903">Direct protein sequencing</keyword>
<keyword id="KW-1185">Reference proteome</keyword>
<keyword id="KW-0687">Ribonucleoprotein</keyword>
<keyword id="KW-0689">Ribosomal protein</keyword>
<keyword id="KW-0690">Ribosome biogenesis</keyword>
<keyword id="KW-0694">RNA-binding</keyword>
<keyword id="KW-0804">Transcription</keyword>
<keyword id="KW-0889">Transcription antitermination</keyword>
<keyword id="KW-0805">Transcription regulation</keyword>
<dbReference type="EMBL" id="V00344">
    <property type="protein sequence ID" value="CAA23633.1"/>
    <property type="molecule type" value="Genomic_DNA"/>
</dbReference>
<dbReference type="EMBL" id="X02613">
    <property type="protein sequence ID" value="CAA26459.1"/>
    <property type="molecule type" value="Genomic_DNA"/>
</dbReference>
<dbReference type="EMBL" id="U18997">
    <property type="protein sequence ID" value="AAA58118.1"/>
    <property type="molecule type" value="Genomic_DNA"/>
</dbReference>
<dbReference type="EMBL" id="U00096">
    <property type="protein sequence ID" value="AAC76346.1"/>
    <property type="molecule type" value="Genomic_DNA"/>
</dbReference>
<dbReference type="EMBL" id="AP009048">
    <property type="protein sequence ID" value="BAE77970.1"/>
    <property type="molecule type" value="Genomic_DNA"/>
</dbReference>
<dbReference type="EMBL" id="AF058450">
    <property type="protein sequence ID" value="AAC14290.1"/>
    <property type="molecule type" value="Genomic_DNA"/>
</dbReference>
<dbReference type="PIR" id="A02720">
    <property type="entry name" value="R3EC10"/>
</dbReference>
<dbReference type="RefSeq" id="NP_417780.1">
    <property type="nucleotide sequence ID" value="NC_000913.3"/>
</dbReference>
<dbReference type="RefSeq" id="WP_001181004.1">
    <property type="nucleotide sequence ID" value="NZ_STEB01000038.1"/>
</dbReference>
<dbReference type="PDB" id="2KVQ">
    <property type="method" value="NMR"/>
    <property type="chains" value="E=1-45, E=68-103"/>
</dbReference>
<dbReference type="PDB" id="2YKR">
    <property type="method" value="EM"/>
    <property type="resolution" value="9.80 A"/>
    <property type="chains" value="J=5-102"/>
</dbReference>
<dbReference type="PDB" id="3D3B">
    <property type="method" value="X-ray"/>
    <property type="resolution" value="1.30 A"/>
    <property type="chains" value="J=1-45, J=68-103"/>
</dbReference>
<dbReference type="PDB" id="3D3C">
    <property type="method" value="X-ray"/>
    <property type="resolution" value="2.60 A"/>
    <property type="chains" value="J/K/L=1-45, J/K/L=68-103"/>
</dbReference>
<dbReference type="PDB" id="3IMQ">
    <property type="method" value="X-ray"/>
    <property type="resolution" value="2.50 A"/>
    <property type="chains" value="J/K/L=1-103"/>
</dbReference>
<dbReference type="PDB" id="3J9Y">
    <property type="method" value="EM"/>
    <property type="resolution" value="3.90 A"/>
    <property type="chains" value="j=1-103"/>
</dbReference>
<dbReference type="PDB" id="3J9Z">
    <property type="method" value="EM"/>
    <property type="resolution" value="3.60 A"/>
    <property type="chains" value="SJ=1-103"/>
</dbReference>
<dbReference type="PDB" id="3JA1">
    <property type="method" value="EM"/>
    <property type="resolution" value="3.60 A"/>
    <property type="chains" value="SJ=1-103"/>
</dbReference>
<dbReference type="PDB" id="3JBU">
    <property type="method" value="EM"/>
    <property type="resolution" value="3.64 A"/>
    <property type="chains" value="J=1-103"/>
</dbReference>
<dbReference type="PDB" id="3JBV">
    <property type="method" value="EM"/>
    <property type="resolution" value="3.32 A"/>
    <property type="chains" value="J=1-103"/>
</dbReference>
<dbReference type="PDB" id="3JCD">
    <property type="method" value="EM"/>
    <property type="resolution" value="3.70 A"/>
    <property type="chains" value="j=1-103"/>
</dbReference>
<dbReference type="PDB" id="3JCE">
    <property type="method" value="EM"/>
    <property type="resolution" value="3.20 A"/>
    <property type="chains" value="j=1-103"/>
</dbReference>
<dbReference type="PDB" id="3JCJ">
    <property type="method" value="EM"/>
    <property type="resolution" value="3.70 A"/>
    <property type="chains" value="r=1-102"/>
</dbReference>
<dbReference type="PDB" id="3JCN">
    <property type="method" value="EM"/>
    <property type="resolution" value="4.60 A"/>
    <property type="chains" value="m=1-102"/>
</dbReference>
<dbReference type="PDB" id="3W1Y">
    <property type="method" value="X-ray"/>
    <property type="resolution" value="2.30 A"/>
    <property type="chains" value="C=1-103"/>
</dbReference>
<dbReference type="PDB" id="4A2I">
    <property type="method" value="EM"/>
    <property type="resolution" value="16.50 A"/>
    <property type="chains" value="J=5-102"/>
</dbReference>
<dbReference type="PDB" id="4ADV">
    <property type="method" value="EM"/>
    <property type="resolution" value="13.50 A"/>
    <property type="chains" value="J=1-103"/>
</dbReference>
<dbReference type="PDB" id="4U1U">
    <property type="method" value="X-ray"/>
    <property type="resolution" value="2.95 A"/>
    <property type="chains" value="AJ/CJ=5-102"/>
</dbReference>
<dbReference type="PDB" id="4U1V">
    <property type="method" value="X-ray"/>
    <property type="resolution" value="3.00 A"/>
    <property type="chains" value="AJ/CJ=5-102"/>
</dbReference>
<dbReference type="PDB" id="4U20">
    <property type="method" value="X-ray"/>
    <property type="resolution" value="2.90 A"/>
    <property type="chains" value="AJ/CJ=5-102"/>
</dbReference>
<dbReference type="PDB" id="4U24">
    <property type="method" value="X-ray"/>
    <property type="resolution" value="2.90 A"/>
    <property type="chains" value="AJ/CJ=5-102"/>
</dbReference>
<dbReference type="PDB" id="4U25">
    <property type="method" value="X-ray"/>
    <property type="resolution" value="2.90 A"/>
    <property type="chains" value="AJ/CJ=5-102"/>
</dbReference>
<dbReference type="PDB" id="4U26">
    <property type="method" value="X-ray"/>
    <property type="resolution" value="2.80 A"/>
    <property type="chains" value="AJ/CJ=5-102"/>
</dbReference>
<dbReference type="PDB" id="4U27">
    <property type="method" value="X-ray"/>
    <property type="resolution" value="2.80 A"/>
    <property type="chains" value="AJ/CJ=5-102"/>
</dbReference>
<dbReference type="PDB" id="4V47">
    <property type="method" value="EM"/>
    <property type="resolution" value="12.30 A"/>
    <property type="chains" value="BJ=1-103"/>
</dbReference>
<dbReference type="PDB" id="4V48">
    <property type="method" value="EM"/>
    <property type="resolution" value="11.50 A"/>
    <property type="chains" value="BJ=1-103"/>
</dbReference>
<dbReference type="PDB" id="4V4H">
    <property type="method" value="X-ray"/>
    <property type="resolution" value="3.46 A"/>
    <property type="chains" value="AJ/CJ=1-103"/>
</dbReference>
<dbReference type="PDB" id="4V4Q">
    <property type="method" value="X-ray"/>
    <property type="resolution" value="3.46 A"/>
    <property type="chains" value="AJ/CJ=1-103"/>
</dbReference>
<dbReference type="PDB" id="4V4V">
    <property type="method" value="EM"/>
    <property type="resolution" value="15.00 A"/>
    <property type="chains" value="AJ=5-100"/>
</dbReference>
<dbReference type="PDB" id="4V4W">
    <property type="method" value="EM"/>
    <property type="resolution" value="15.00 A"/>
    <property type="chains" value="AJ=5-100"/>
</dbReference>
<dbReference type="PDB" id="4V50">
    <property type="method" value="X-ray"/>
    <property type="resolution" value="3.22 A"/>
    <property type="chains" value="AJ/CJ=1-103"/>
</dbReference>
<dbReference type="PDB" id="4V52">
    <property type="method" value="X-ray"/>
    <property type="resolution" value="3.21 A"/>
    <property type="chains" value="AJ/CJ=1-103"/>
</dbReference>
<dbReference type="PDB" id="4V53">
    <property type="method" value="X-ray"/>
    <property type="resolution" value="3.54 A"/>
    <property type="chains" value="AJ/CJ=1-103"/>
</dbReference>
<dbReference type="PDB" id="4V54">
    <property type="method" value="X-ray"/>
    <property type="resolution" value="3.30 A"/>
    <property type="chains" value="AJ/CJ=1-103"/>
</dbReference>
<dbReference type="PDB" id="4V55">
    <property type="method" value="X-ray"/>
    <property type="resolution" value="4.00 A"/>
    <property type="chains" value="AJ/CJ=1-103"/>
</dbReference>
<dbReference type="PDB" id="4V56">
    <property type="method" value="X-ray"/>
    <property type="resolution" value="3.93 A"/>
    <property type="chains" value="AJ/CJ=1-103"/>
</dbReference>
<dbReference type="PDB" id="4V57">
    <property type="method" value="X-ray"/>
    <property type="resolution" value="3.50 A"/>
    <property type="chains" value="AJ/CJ=1-103"/>
</dbReference>
<dbReference type="PDB" id="4V5B">
    <property type="method" value="X-ray"/>
    <property type="resolution" value="3.74 A"/>
    <property type="chains" value="BJ/DJ=1-103"/>
</dbReference>
<dbReference type="PDB" id="4V5H">
    <property type="method" value="EM"/>
    <property type="resolution" value="5.80 A"/>
    <property type="chains" value="AJ=5-102"/>
</dbReference>
<dbReference type="PDB" id="4V5Y">
    <property type="method" value="X-ray"/>
    <property type="resolution" value="4.45 A"/>
    <property type="chains" value="AJ/CJ=1-103"/>
</dbReference>
<dbReference type="PDB" id="4V64">
    <property type="method" value="X-ray"/>
    <property type="resolution" value="3.50 A"/>
    <property type="chains" value="AJ/CJ=1-103"/>
</dbReference>
<dbReference type="PDB" id="4V65">
    <property type="method" value="EM"/>
    <property type="resolution" value="9.00 A"/>
    <property type="chains" value="AX=1-103"/>
</dbReference>
<dbReference type="PDB" id="4V66">
    <property type="method" value="EM"/>
    <property type="resolution" value="9.00 A"/>
    <property type="chains" value="AX=1-103"/>
</dbReference>
<dbReference type="PDB" id="4V69">
    <property type="method" value="EM"/>
    <property type="resolution" value="6.70 A"/>
    <property type="chains" value="AJ=5-102"/>
</dbReference>
<dbReference type="PDB" id="4V6C">
    <property type="method" value="X-ray"/>
    <property type="resolution" value="3.19 A"/>
    <property type="chains" value="AJ/CJ=1-103"/>
</dbReference>
<dbReference type="PDB" id="4V6D">
    <property type="method" value="X-ray"/>
    <property type="resolution" value="3.81 A"/>
    <property type="chains" value="AJ/CJ=1-103"/>
</dbReference>
<dbReference type="PDB" id="4V6E">
    <property type="method" value="X-ray"/>
    <property type="resolution" value="3.71 A"/>
    <property type="chains" value="AJ/CJ=1-103"/>
</dbReference>
<dbReference type="PDB" id="4V6K">
    <property type="method" value="EM"/>
    <property type="resolution" value="8.25 A"/>
    <property type="chains" value="BN=1-103"/>
</dbReference>
<dbReference type="PDB" id="4V6L">
    <property type="method" value="EM"/>
    <property type="resolution" value="13.20 A"/>
    <property type="chains" value="AN=1-103"/>
</dbReference>
<dbReference type="PDB" id="4V6M">
    <property type="method" value="EM"/>
    <property type="resolution" value="7.10 A"/>
    <property type="chains" value="AJ=1-103"/>
</dbReference>
<dbReference type="PDB" id="4V6N">
    <property type="method" value="EM"/>
    <property type="resolution" value="12.10 A"/>
    <property type="chains" value="BM=1-103"/>
</dbReference>
<dbReference type="PDB" id="4V6O">
    <property type="method" value="EM"/>
    <property type="resolution" value="14.70 A"/>
    <property type="chains" value="AM=1-103"/>
</dbReference>
<dbReference type="PDB" id="4V6P">
    <property type="method" value="EM"/>
    <property type="resolution" value="13.50 A"/>
    <property type="chains" value="AM=1-103"/>
</dbReference>
<dbReference type="PDB" id="4V6Q">
    <property type="method" value="EM"/>
    <property type="resolution" value="11.50 A"/>
    <property type="chains" value="AM=1-103"/>
</dbReference>
<dbReference type="PDB" id="4V6R">
    <property type="method" value="EM"/>
    <property type="resolution" value="11.50 A"/>
    <property type="chains" value="AM=1-103"/>
</dbReference>
<dbReference type="PDB" id="4V6S">
    <property type="method" value="EM"/>
    <property type="resolution" value="13.10 A"/>
    <property type="chains" value="BL=1-103"/>
</dbReference>
<dbReference type="PDB" id="4V6T">
    <property type="method" value="EM"/>
    <property type="resolution" value="8.30 A"/>
    <property type="chains" value="AJ=5-102"/>
</dbReference>
<dbReference type="PDB" id="4V6V">
    <property type="method" value="EM"/>
    <property type="resolution" value="9.80 A"/>
    <property type="chains" value="AJ=1-103"/>
</dbReference>
<dbReference type="PDB" id="4V6Y">
    <property type="method" value="EM"/>
    <property type="resolution" value="12.00 A"/>
    <property type="chains" value="AJ=5-102"/>
</dbReference>
<dbReference type="PDB" id="4V6Z">
    <property type="method" value="EM"/>
    <property type="resolution" value="12.00 A"/>
    <property type="chains" value="AJ=5-102"/>
</dbReference>
<dbReference type="PDB" id="4V70">
    <property type="method" value="EM"/>
    <property type="resolution" value="17.00 A"/>
    <property type="chains" value="AJ=5-102"/>
</dbReference>
<dbReference type="PDB" id="4V71">
    <property type="method" value="EM"/>
    <property type="resolution" value="20.00 A"/>
    <property type="chains" value="AJ=5-102"/>
</dbReference>
<dbReference type="PDB" id="4V72">
    <property type="method" value="EM"/>
    <property type="resolution" value="13.00 A"/>
    <property type="chains" value="AJ=5-102"/>
</dbReference>
<dbReference type="PDB" id="4V73">
    <property type="method" value="EM"/>
    <property type="resolution" value="15.00 A"/>
    <property type="chains" value="AJ=5-102"/>
</dbReference>
<dbReference type="PDB" id="4V74">
    <property type="method" value="EM"/>
    <property type="resolution" value="17.00 A"/>
    <property type="chains" value="AJ=5-102"/>
</dbReference>
<dbReference type="PDB" id="4V75">
    <property type="method" value="EM"/>
    <property type="resolution" value="12.00 A"/>
    <property type="chains" value="AJ=5-102"/>
</dbReference>
<dbReference type="PDB" id="4V76">
    <property type="method" value="EM"/>
    <property type="resolution" value="17.00 A"/>
    <property type="chains" value="AJ=5-102"/>
</dbReference>
<dbReference type="PDB" id="4V77">
    <property type="method" value="EM"/>
    <property type="resolution" value="17.00 A"/>
    <property type="chains" value="AJ=5-102"/>
</dbReference>
<dbReference type="PDB" id="4V78">
    <property type="method" value="EM"/>
    <property type="resolution" value="20.00 A"/>
    <property type="chains" value="AJ=5-102"/>
</dbReference>
<dbReference type="PDB" id="4V79">
    <property type="method" value="EM"/>
    <property type="resolution" value="15.00 A"/>
    <property type="chains" value="AJ=5-102"/>
</dbReference>
<dbReference type="PDB" id="4V7A">
    <property type="method" value="EM"/>
    <property type="resolution" value="9.00 A"/>
    <property type="chains" value="AJ=5-102"/>
</dbReference>
<dbReference type="PDB" id="4V7B">
    <property type="method" value="EM"/>
    <property type="resolution" value="6.80 A"/>
    <property type="chains" value="AJ=1-103"/>
</dbReference>
<dbReference type="PDB" id="4V7C">
    <property type="method" value="EM"/>
    <property type="resolution" value="7.60 A"/>
    <property type="chains" value="AJ=1-103"/>
</dbReference>
<dbReference type="PDB" id="4V7D">
    <property type="method" value="EM"/>
    <property type="resolution" value="7.60 A"/>
    <property type="chains" value="BJ=1-103"/>
</dbReference>
<dbReference type="PDB" id="4V7I">
    <property type="method" value="EM"/>
    <property type="resolution" value="9.60 A"/>
    <property type="chains" value="BJ=1-103"/>
</dbReference>
<dbReference type="PDB" id="4V7S">
    <property type="method" value="X-ray"/>
    <property type="resolution" value="3.25 A"/>
    <property type="chains" value="AJ/CJ=5-102"/>
</dbReference>
<dbReference type="PDB" id="4V7T">
    <property type="method" value="X-ray"/>
    <property type="resolution" value="3.19 A"/>
    <property type="chains" value="AJ/CJ=5-102"/>
</dbReference>
<dbReference type="PDB" id="4V7U">
    <property type="method" value="X-ray"/>
    <property type="resolution" value="3.10 A"/>
    <property type="chains" value="AJ/CJ=5-102"/>
</dbReference>
<dbReference type="PDB" id="4V7V">
    <property type="method" value="X-ray"/>
    <property type="resolution" value="3.29 A"/>
    <property type="chains" value="AJ/CJ=5-102"/>
</dbReference>
<dbReference type="PDB" id="4V85">
    <property type="method" value="X-ray"/>
    <property type="resolution" value="3.20 A"/>
    <property type="chains" value="AJ=1-103"/>
</dbReference>
<dbReference type="PDB" id="4V89">
    <property type="method" value="X-ray"/>
    <property type="resolution" value="3.70 A"/>
    <property type="chains" value="AJ=1-103"/>
</dbReference>
<dbReference type="PDB" id="4V9C">
    <property type="method" value="X-ray"/>
    <property type="resolution" value="3.30 A"/>
    <property type="chains" value="AJ/CJ=1-103"/>
</dbReference>
<dbReference type="PDB" id="4V9D">
    <property type="method" value="X-ray"/>
    <property type="resolution" value="3.00 A"/>
    <property type="chains" value="AJ/BJ=5-102"/>
</dbReference>
<dbReference type="PDB" id="4V9O">
    <property type="method" value="X-ray"/>
    <property type="resolution" value="2.90 A"/>
    <property type="chains" value="BJ/DJ/FJ/HJ=1-103"/>
</dbReference>
<dbReference type="PDB" id="4V9P">
    <property type="method" value="X-ray"/>
    <property type="resolution" value="2.90 A"/>
    <property type="chains" value="BJ/DJ/FJ/HJ=1-103"/>
</dbReference>
<dbReference type="PDB" id="4WF1">
    <property type="method" value="X-ray"/>
    <property type="resolution" value="3.09 A"/>
    <property type="chains" value="AJ/CJ=5-102"/>
</dbReference>
<dbReference type="PDB" id="4WOI">
    <property type="method" value="X-ray"/>
    <property type="resolution" value="3.00 A"/>
    <property type="chains" value="AJ/DJ=1-103"/>
</dbReference>
<dbReference type="PDB" id="4WWW">
    <property type="method" value="X-ray"/>
    <property type="resolution" value="3.10 A"/>
    <property type="chains" value="QJ/XJ=5-102"/>
</dbReference>
<dbReference type="PDB" id="4YBB">
    <property type="method" value="X-ray"/>
    <property type="resolution" value="2.10 A"/>
    <property type="chains" value="AJ/BJ=4-102"/>
</dbReference>
<dbReference type="PDB" id="5AFI">
    <property type="method" value="EM"/>
    <property type="resolution" value="2.90 A"/>
    <property type="chains" value="j=1-103"/>
</dbReference>
<dbReference type="PDB" id="5H5U">
    <property type="method" value="EM"/>
    <property type="resolution" value="3.00 A"/>
    <property type="chains" value="q=1-103"/>
</dbReference>
<dbReference type="PDB" id="5IQR">
    <property type="method" value="EM"/>
    <property type="resolution" value="3.00 A"/>
    <property type="chains" value="o=1-103"/>
</dbReference>
<dbReference type="PDB" id="5IT8">
    <property type="method" value="X-ray"/>
    <property type="resolution" value="3.12 A"/>
    <property type="chains" value="AJ/BJ=4-102"/>
</dbReference>
<dbReference type="PDB" id="5J5B">
    <property type="method" value="X-ray"/>
    <property type="resolution" value="2.80 A"/>
    <property type="chains" value="AJ/BJ=4-102"/>
</dbReference>
<dbReference type="PDB" id="5J7L">
    <property type="method" value="X-ray"/>
    <property type="resolution" value="3.00 A"/>
    <property type="chains" value="AJ/BJ=4-102"/>
</dbReference>
<dbReference type="PDB" id="5J88">
    <property type="method" value="X-ray"/>
    <property type="resolution" value="3.32 A"/>
    <property type="chains" value="AJ/BJ=4-102"/>
</dbReference>
<dbReference type="PDB" id="5J8A">
    <property type="method" value="X-ray"/>
    <property type="resolution" value="3.10 A"/>
    <property type="chains" value="AJ/BJ=4-102"/>
</dbReference>
<dbReference type="PDB" id="5J91">
    <property type="method" value="X-ray"/>
    <property type="resolution" value="2.96 A"/>
    <property type="chains" value="AJ/BJ=4-102"/>
</dbReference>
<dbReference type="PDB" id="5JC9">
    <property type="method" value="X-ray"/>
    <property type="resolution" value="3.03 A"/>
    <property type="chains" value="AJ/BJ=4-102"/>
</dbReference>
<dbReference type="PDB" id="5JTE">
    <property type="method" value="EM"/>
    <property type="resolution" value="3.60 A"/>
    <property type="chains" value="AJ=1-103"/>
</dbReference>
<dbReference type="PDB" id="5JU8">
    <property type="method" value="EM"/>
    <property type="resolution" value="3.60 A"/>
    <property type="chains" value="AJ=1-103"/>
</dbReference>
<dbReference type="PDB" id="5KCR">
    <property type="method" value="EM"/>
    <property type="resolution" value="3.60 A"/>
    <property type="chains" value="1j=1-103"/>
</dbReference>
<dbReference type="PDB" id="5KCS">
    <property type="method" value="EM"/>
    <property type="resolution" value="3.90 A"/>
    <property type="chains" value="1j=1-103"/>
</dbReference>
<dbReference type="PDB" id="5KPS">
    <property type="method" value="EM"/>
    <property type="resolution" value="3.90 A"/>
    <property type="chains" value="15=1-103"/>
</dbReference>
<dbReference type="PDB" id="5KPV">
    <property type="method" value="EM"/>
    <property type="resolution" value="4.10 A"/>
    <property type="chains" value="14=1-103"/>
</dbReference>
<dbReference type="PDB" id="5KPW">
    <property type="method" value="EM"/>
    <property type="resolution" value="3.90 A"/>
    <property type="chains" value="14=1-103"/>
</dbReference>
<dbReference type="PDB" id="5KPX">
    <property type="method" value="EM"/>
    <property type="resolution" value="3.90 A"/>
    <property type="chains" value="14=1-103"/>
</dbReference>
<dbReference type="PDB" id="5L3P">
    <property type="method" value="EM"/>
    <property type="resolution" value="3.70 A"/>
    <property type="chains" value="j=1-103"/>
</dbReference>
<dbReference type="PDB" id="5LM7">
    <property type="method" value="X-ray"/>
    <property type="resolution" value="3.35 A"/>
    <property type="chains" value="E/J=1-103"/>
</dbReference>
<dbReference type="PDB" id="5LZA">
    <property type="method" value="EM"/>
    <property type="resolution" value="3.60 A"/>
    <property type="chains" value="j=5-102"/>
</dbReference>
<dbReference type="PDB" id="5LZB">
    <property type="method" value="EM"/>
    <property type="resolution" value="5.30 A"/>
    <property type="chains" value="j=5-102"/>
</dbReference>
<dbReference type="PDB" id="5LZC">
    <property type="method" value="EM"/>
    <property type="resolution" value="4.80 A"/>
    <property type="chains" value="j=5-102"/>
</dbReference>
<dbReference type="PDB" id="5LZD">
    <property type="method" value="EM"/>
    <property type="resolution" value="3.40 A"/>
    <property type="chains" value="j=5-102"/>
</dbReference>
<dbReference type="PDB" id="5LZE">
    <property type="method" value="EM"/>
    <property type="resolution" value="3.50 A"/>
    <property type="chains" value="j=5-102"/>
</dbReference>
<dbReference type="PDB" id="5LZF">
    <property type="method" value="EM"/>
    <property type="resolution" value="4.60 A"/>
    <property type="chains" value="j=5-102"/>
</dbReference>
<dbReference type="PDB" id="5MDV">
    <property type="method" value="EM"/>
    <property type="resolution" value="2.97 A"/>
    <property type="chains" value="o=1-103"/>
</dbReference>
<dbReference type="PDB" id="5MDW">
    <property type="method" value="EM"/>
    <property type="resolution" value="3.06 A"/>
    <property type="chains" value="o=1-103"/>
</dbReference>
<dbReference type="PDB" id="5MDY">
    <property type="method" value="EM"/>
    <property type="resolution" value="3.35 A"/>
    <property type="chains" value="o=1-103"/>
</dbReference>
<dbReference type="PDB" id="5MDZ">
    <property type="method" value="EM"/>
    <property type="resolution" value="3.10 A"/>
    <property type="chains" value="o=1-103"/>
</dbReference>
<dbReference type="PDB" id="5ME0">
    <property type="method" value="EM"/>
    <property type="resolution" value="13.50 A"/>
    <property type="chains" value="J=1-103"/>
</dbReference>
<dbReference type="PDB" id="5ME1">
    <property type="method" value="EM"/>
    <property type="resolution" value="13.50 A"/>
    <property type="chains" value="J=1-103"/>
</dbReference>
<dbReference type="PDB" id="5MGP">
    <property type="method" value="EM"/>
    <property type="resolution" value="3.10 A"/>
    <property type="chains" value="j=5-102"/>
</dbReference>
<dbReference type="PDB" id="5MS0">
    <property type="method" value="EM"/>
    <property type="resolution" value="9.80 A"/>
    <property type="chains" value="E=4-103"/>
</dbReference>
<dbReference type="PDB" id="5MY1">
    <property type="method" value="EM"/>
    <property type="resolution" value="7.60 A"/>
    <property type="chains" value="J=1-103"/>
</dbReference>
<dbReference type="PDB" id="5NO2">
    <property type="method" value="EM"/>
    <property type="resolution" value="5.16 A"/>
    <property type="chains" value="J=4-102"/>
</dbReference>
<dbReference type="PDB" id="5NO3">
    <property type="method" value="EM"/>
    <property type="resolution" value="5.16 A"/>
    <property type="chains" value="J=4-102"/>
</dbReference>
<dbReference type="PDB" id="5NO4">
    <property type="method" value="EM"/>
    <property type="resolution" value="5.16 A"/>
    <property type="chains" value="J=4-102"/>
</dbReference>
<dbReference type="PDB" id="5NP6">
    <property type="method" value="EM"/>
    <property type="resolution" value="3.60 A"/>
    <property type="chains" value="M=5-102"/>
</dbReference>
<dbReference type="PDB" id="5NWY">
    <property type="method" value="EM"/>
    <property type="resolution" value="2.93 A"/>
    <property type="chains" value="9=1-103"/>
</dbReference>
<dbReference type="PDB" id="5O2R">
    <property type="method" value="EM"/>
    <property type="resolution" value="3.40 A"/>
    <property type="chains" value="j=5-102"/>
</dbReference>
<dbReference type="PDB" id="5U4I">
    <property type="method" value="EM"/>
    <property type="resolution" value="3.50 A"/>
    <property type="chains" value="j=1-103"/>
</dbReference>
<dbReference type="PDB" id="5U9F">
    <property type="method" value="EM"/>
    <property type="resolution" value="3.20 A"/>
    <property type="chains" value="J=1-103"/>
</dbReference>
<dbReference type="PDB" id="5U9G">
    <property type="method" value="EM"/>
    <property type="resolution" value="3.20 A"/>
    <property type="chains" value="J=1-103"/>
</dbReference>
<dbReference type="PDB" id="5UYK">
    <property type="method" value="EM"/>
    <property type="resolution" value="3.90 A"/>
    <property type="chains" value="J=5-102"/>
</dbReference>
<dbReference type="PDB" id="5UYL">
    <property type="method" value="EM"/>
    <property type="resolution" value="3.60 A"/>
    <property type="chains" value="J=5-102"/>
</dbReference>
<dbReference type="PDB" id="5UYM">
    <property type="method" value="EM"/>
    <property type="resolution" value="3.20 A"/>
    <property type="chains" value="J=5-102"/>
</dbReference>
<dbReference type="PDB" id="5UYN">
    <property type="method" value="EM"/>
    <property type="resolution" value="4.00 A"/>
    <property type="chains" value="J=5-102"/>
</dbReference>
<dbReference type="PDB" id="5UYP">
    <property type="method" value="EM"/>
    <property type="resolution" value="3.90 A"/>
    <property type="chains" value="J=5-102"/>
</dbReference>
<dbReference type="PDB" id="5UYQ">
    <property type="method" value="EM"/>
    <property type="resolution" value="3.80 A"/>
    <property type="chains" value="J=5-102"/>
</dbReference>
<dbReference type="PDB" id="5UZ4">
    <property type="method" value="EM"/>
    <property type="resolution" value="5.80 A"/>
    <property type="chains" value="J=1-103"/>
</dbReference>
<dbReference type="PDB" id="5WDT">
    <property type="method" value="EM"/>
    <property type="resolution" value="3.00 A"/>
    <property type="chains" value="j=5-102"/>
</dbReference>
<dbReference type="PDB" id="5WE4">
    <property type="method" value="EM"/>
    <property type="resolution" value="3.10 A"/>
    <property type="chains" value="j=5-102"/>
</dbReference>
<dbReference type="PDB" id="5WE6">
    <property type="method" value="EM"/>
    <property type="resolution" value="3.40 A"/>
    <property type="chains" value="j=5-102"/>
</dbReference>
<dbReference type="PDB" id="5WF0">
    <property type="method" value="EM"/>
    <property type="resolution" value="3.60 A"/>
    <property type="chains" value="j=5-102"/>
</dbReference>
<dbReference type="PDB" id="5WFK">
    <property type="method" value="EM"/>
    <property type="resolution" value="3.40 A"/>
    <property type="chains" value="j=5-102"/>
</dbReference>
<dbReference type="PDB" id="5WFS">
    <property type="method" value="EM"/>
    <property type="resolution" value="3.00 A"/>
    <property type="chains" value="j=5-102"/>
</dbReference>
<dbReference type="PDB" id="6AWB">
    <property type="method" value="EM"/>
    <property type="resolution" value="6.70 A"/>
    <property type="chains" value="M=5-102"/>
</dbReference>
<dbReference type="PDB" id="6AWC">
    <property type="method" value="EM"/>
    <property type="resolution" value="7.90 A"/>
    <property type="chains" value="M=5-102"/>
</dbReference>
<dbReference type="PDB" id="6AWD">
    <property type="method" value="EM"/>
    <property type="resolution" value="8.10 A"/>
    <property type="chains" value="M=5-102"/>
</dbReference>
<dbReference type="PDB" id="6BU8">
    <property type="method" value="EM"/>
    <property type="resolution" value="3.50 A"/>
    <property type="chains" value="J=5-102"/>
</dbReference>
<dbReference type="PDB" id="6BY1">
    <property type="method" value="X-ray"/>
    <property type="resolution" value="3.94 A"/>
    <property type="chains" value="AJ/BJ=5-102"/>
</dbReference>
<dbReference type="PDB" id="6C4I">
    <property type="method" value="EM"/>
    <property type="resolution" value="3.24 A"/>
    <property type="chains" value="j=1-103"/>
</dbReference>
<dbReference type="PDB" id="6DNC">
    <property type="method" value="EM"/>
    <property type="resolution" value="3.70 A"/>
    <property type="chains" value="WA=1-103"/>
</dbReference>
<dbReference type="PDB" id="6ENF">
    <property type="method" value="EM"/>
    <property type="resolution" value="3.20 A"/>
    <property type="chains" value="j=5-102"/>
</dbReference>
<dbReference type="PDB" id="6ENJ">
    <property type="method" value="EM"/>
    <property type="resolution" value="3.70 A"/>
    <property type="chains" value="j=5-102"/>
</dbReference>
<dbReference type="PDB" id="6ENU">
    <property type="method" value="EM"/>
    <property type="resolution" value="3.10 A"/>
    <property type="chains" value="j=5-102"/>
</dbReference>
<dbReference type="PDB" id="6GOV">
    <property type="method" value="EM"/>
    <property type="resolution" value="3.70 A"/>
    <property type="chains" value="E=1-103"/>
</dbReference>
<dbReference type="PDB" id="6GWT">
    <property type="method" value="EM"/>
    <property type="resolution" value="3.80 A"/>
    <property type="chains" value="j=5-102"/>
</dbReference>
<dbReference type="PDB" id="6GXM">
    <property type="method" value="EM"/>
    <property type="resolution" value="3.80 A"/>
    <property type="chains" value="j=5-102"/>
</dbReference>
<dbReference type="PDB" id="6GXN">
    <property type="method" value="EM"/>
    <property type="resolution" value="3.90 A"/>
    <property type="chains" value="j=5-102"/>
</dbReference>
<dbReference type="PDB" id="6GXO">
    <property type="method" value="EM"/>
    <property type="resolution" value="3.90 A"/>
    <property type="chains" value="j=5-102"/>
</dbReference>
<dbReference type="PDB" id="6GXP">
    <property type="method" value="EM"/>
    <property type="resolution" value="4.40 A"/>
    <property type="chains" value="j=5-102"/>
</dbReference>
<dbReference type="PDB" id="6H4N">
    <property type="method" value="EM"/>
    <property type="resolution" value="3.00 A"/>
    <property type="chains" value="j=5-102"/>
</dbReference>
<dbReference type="PDB" id="6H58">
    <property type="method" value="EM"/>
    <property type="resolution" value="7.90 A"/>
    <property type="chains" value="j/jj=5-102"/>
</dbReference>
<dbReference type="PDB" id="6HRM">
    <property type="method" value="EM"/>
    <property type="resolution" value="2.96 A"/>
    <property type="chains" value="o=5-103"/>
</dbReference>
<dbReference type="PDB" id="6I7V">
    <property type="method" value="X-ray"/>
    <property type="resolution" value="2.90 A"/>
    <property type="chains" value="AJ/BJ=5-102"/>
</dbReference>
<dbReference type="PDB" id="6NQB">
    <property type="method" value="EM"/>
    <property type="resolution" value="3.80 A"/>
    <property type="chains" value="J=5-102"/>
</dbReference>
<dbReference type="PDB" id="6O7K">
    <property type="method" value="EM"/>
    <property type="resolution" value="4.20 A"/>
    <property type="chains" value="r=5-102"/>
</dbReference>
<dbReference type="PDB" id="6O9J">
    <property type="method" value="EM"/>
    <property type="resolution" value="3.90 A"/>
    <property type="chains" value="j=5-102"/>
</dbReference>
<dbReference type="PDB" id="6O9K">
    <property type="method" value="EM"/>
    <property type="resolution" value="4.00 A"/>
    <property type="chains" value="j=5-102"/>
</dbReference>
<dbReference type="PDB" id="6OFX">
    <property type="method" value="EM"/>
    <property type="resolution" value="3.30 A"/>
    <property type="chains" value="O=5-102"/>
</dbReference>
<dbReference type="PDB" id="6OG7">
    <property type="method" value="EM"/>
    <property type="resolution" value="3.30 A"/>
    <property type="chains" value="O=5-102"/>
</dbReference>
<dbReference type="PDB" id="6OGF">
    <property type="method" value="EM"/>
    <property type="resolution" value="3.90 A"/>
    <property type="chains" value="O=1-103"/>
</dbReference>
<dbReference type="PDB" id="6OGG">
    <property type="method" value="EM"/>
    <property type="resolution" value="4.20 A"/>
    <property type="chains" value="O=1-103"/>
</dbReference>
<dbReference type="PDB" id="6OGI">
    <property type="method" value="EM"/>
    <property type="resolution" value="3.40 A"/>
    <property type="chains" value="O=1-103"/>
</dbReference>
<dbReference type="PDB" id="6OM6">
    <property type="method" value="EM"/>
    <property type="resolution" value="3.10 A"/>
    <property type="chains" value="o=1-103"/>
</dbReference>
<dbReference type="PDB" id="6ORE">
    <property type="method" value="EM"/>
    <property type="resolution" value="2.90 A"/>
    <property type="chains" value="o=5-103"/>
</dbReference>
<dbReference type="PDB" id="6ORL">
    <property type="method" value="EM"/>
    <property type="resolution" value="3.50 A"/>
    <property type="chains" value="o=5-103"/>
</dbReference>
<dbReference type="PDB" id="6OSK">
    <property type="method" value="EM"/>
    <property type="resolution" value="3.60 A"/>
    <property type="chains" value="o=5-103"/>
</dbReference>
<dbReference type="PDB" id="6OSQ">
    <property type="method" value="EM"/>
    <property type="resolution" value="3.50 A"/>
    <property type="chains" value="o=5-103"/>
</dbReference>
<dbReference type="PDB" id="6OST">
    <property type="method" value="EM"/>
    <property type="resolution" value="4.20 A"/>
    <property type="chains" value="o=5-103"/>
</dbReference>
<dbReference type="PDB" id="6OT3">
    <property type="method" value="EM"/>
    <property type="resolution" value="3.90 A"/>
    <property type="chains" value="o=5-103"/>
</dbReference>
<dbReference type="PDB" id="6OUO">
    <property type="method" value="EM"/>
    <property type="resolution" value="3.70 A"/>
    <property type="chains" value="o=5-103"/>
</dbReference>
<dbReference type="PDB" id="6Q97">
    <property type="method" value="EM"/>
    <property type="resolution" value="3.90 A"/>
    <property type="chains" value="o=5-103"/>
</dbReference>
<dbReference type="PDB" id="6Q98">
    <property type="method" value="EM"/>
    <property type="resolution" value="4.30 A"/>
    <property type="chains" value="o=1-103"/>
</dbReference>
<dbReference type="PDB" id="6Q9A">
    <property type="method" value="EM"/>
    <property type="resolution" value="3.70 A"/>
    <property type="chains" value="o=5-103"/>
</dbReference>
<dbReference type="PDB" id="6SZS">
    <property type="method" value="EM"/>
    <property type="resolution" value="3.06 A"/>
    <property type="chains" value="j=1-103"/>
</dbReference>
<dbReference type="PDB" id="6TBV">
    <property type="method" value="EM"/>
    <property type="resolution" value="2.70 A"/>
    <property type="chains" value="S101=1-103"/>
</dbReference>
<dbReference type="PDB" id="6TC3">
    <property type="method" value="EM"/>
    <property type="resolution" value="2.70 A"/>
    <property type="chains" value="S101=1-103"/>
</dbReference>
<dbReference type="PDB" id="6TQN">
    <property type="method" value="EM"/>
    <property type="resolution" value="3.80 A"/>
    <property type="chains" value="E=1-103"/>
</dbReference>
<dbReference type="PDB" id="6TQO">
    <property type="method" value="EM"/>
    <property type="resolution" value="4.00 A"/>
    <property type="chains" value="E=1-103"/>
</dbReference>
<dbReference type="PDB" id="6VU3">
    <property type="method" value="EM"/>
    <property type="resolution" value="3.70 A"/>
    <property type="chains" value="P=5-103"/>
</dbReference>
<dbReference type="PDB" id="6VWL">
    <property type="method" value="EM"/>
    <property type="resolution" value="3.10 A"/>
    <property type="chains" value="i=1-103"/>
</dbReference>
<dbReference type="PDB" id="6VWM">
    <property type="method" value="EM"/>
    <property type="resolution" value="3.40 A"/>
    <property type="chains" value="i=1-103"/>
</dbReference>
<dbReference type="PDB" id="6VWN">
    <property type="method" value="EM"/>
    <property type="resolution" value="3.40 A"/>
    <property type="chains" value="i=1-103"/>
</dbReference>
<dbReference type="PDB" id="6VYQ">
    <property type="method" value="EM"/>
    <property type="resolution" value="3.70 A"/>
    <property type="chains" value="P=5-103"/>
</dbReference>
<dbReference type="PDB" id="6VYR">
    <property type="method" value="EM"/>
    <property type="resolution" value="3.80 A"/>
    <property type="chains" value="P=1-103"/>
</dbReference>
<dbReference type="PDB" id="6VYS">
    <property type="method" value="EM"/>
    <property type="resolution" value="3.70 A"/>
    <property type="chains" value="P=1-103"/>
</dbReference>
<dbReference type="PDB" id="6VYT">
    <property type="method" value="EM"/>
    <property type="resolution" value="14.00 A"/>
    <property type="chains" value="P=1-103"/>
</dbReference>
<dbReference type="PDB" id="6VYU">
    <property type="method" value="EM"/>
    <property type="resolution" value="7.00 A"/>
    <property type="chains" value="P=1-103"/>
</dbReference>
<dbReference type="PDB" id="6VYW">
    <property type="method" value="EM"/>
    <property type="resolution" value="7.00 A"/>
    <property type="chains" value="P=1-103"/>
</dbReference>
<dbReference type="PDB" id="6VYX">
    <property type="method" value="EM"/>
    <property type="resolution" value="9.90 A"/>
    <property type="chains" value="P=1-103"/>
</dbReference>
<dbReference type="PDB" id="6VYY">
    <property type="method" value="EM"/>
    <property type="resolution" value="9.90 A"/>
    <property type="chains" value="P=1-103"/>
</dbReference>
<dbReference type="PDB" id="6VYZ">
    <property type="method" value="EM"/>
    <property type="resolution" value="9.90 A"/>
    <property type="chains" value="P=1-103"/>
</dbReference>
<dbReference type="PDB" id="6VZ2">
    <property type="method" value="EM"/>
    <property type="resolution" value="10.00 A"/>
    <property type="chains" value="P=1-103"/>
</dbReference>
<dbReference type="PDB" id="6VZ3">
    <property type="method" value="EM"/>
    <property type="resolution" value="8.90 A"/>
    <property type="chains" value="P=5-103"/>
</dbReference>
<dbReference type="PDB" id="6VZ5">
    <property type="method" value="EM"/>
    <property type="resolution" value="8.90 A"/>
    <property type="chains" value="P=1-103"/>
</dbReference>
<dbReference type="PDB" id="6VZ7">
    <property type="method" value="EM"/>
    <property type="resolution" value="7.00 A"/>
    <property type="chains" value="P=5-103"/>
</dbReference>
<dbReference type="PDB" id="6VZJ">
    <property type="method" value="EM"/>
    <property type="resolution" value="4.10 A"/>
    <property type="chains" value="P=5-103"/>
</dbReference>
<dbReference type="PDB" id="6W6K">
    <property type="method" value="EM"/>
    <property type="resolution" value="3.60 A"/>
    <property type="chains" value="J=1-103"/>
</dbReference>
<dbReference type="PDB" id="6W77">
    <property type="method" value="EM"/>
    <property type="resolution" value="3.60 A"/>
    <property type="chains" value="J=1-103"/>
</dbReference>
<dbReference type="PDB" id="6W7M">
    <property type="method" value="EM"/>
    <property type="resolution" value="3.80 A"/>
    <property type="chains" value="J=1-103"/>
</dbReference>
<dbReference type="PDB" id="6W7N">
    <property type="method" value="EM"/>
    <property type="resolution" value="3.40 A"/>
    <property type="chains" value="J=1-103"/>
</dbReference>
<dbReference type="PDB" id="6WD0">
    <property type="method" value="EM"/>
    <property type="resolution" value="3.00 A"/>
    <property type="chains" value="O=5-102"/>
</dbReference>
<dbReference type="PDB" id="6WD1">
    <property type="method" value="EM"/>
    <property type="resolution" value="3.30 A"/>
    <property type="chains" value="O=5-102"/>
</dbReference>
<dbReference type="PDB" id="6WD2">
    <property type="method" value="EM"/>
    <property type="resolution" value="3.60 A"/>
    <property type="chains" value="O=5-102"/>
</dbReference>
<dbReference type="PDB" id="6WD3">
    <property type="method" value="EM"/>
    <property type="resolution" value="3.60 A"/>
    <property type="chains" value="O=5-102"/>
</dbReference>
<dbReference type="PDB" id="6WD4">
    <property type="method" value="EM"/>
    <property type="resolution" value="3.70 A"/>
    <property type="chains" value="O=5-102"/>
</dbReference>
<dbReference type="PDB" id="6WD5">
    <property type="method" value="EM"/>
    <property type="resolution" value="3.60 A"/>
    <property type="chains" value="O=5-102"/>
</dbReference>
<dbReference type="PDB" id="6WD6">
    <property type="method" value="EM"/>
    <property type="resolution" value="3.70 A"/>
    <property type="chains" value="O=5-102"/>
</dbReference>
<dbReference type="PDB" id="6WD7">
    <property type="method" value="EM"/>
    <property type="resolution" value="3.90 A"/>
    <property type="chains" value="O=5-102"/>
</dbReference>
<dbReference type="PDB" id="6WD8">
    <property type="method" value="EM"/>
    <property type="resolution" value="3.70 A"/>
    <property type="chains" value="O=5-102"/>
</dbReference>
<dbReference type="PDB" id="6WD9">
    <property type="method" value="EM"/>
    <property type="resolution" value="3.70 A"/>
    <property type="chains" value="O=5-102"/>
</dbReference>
<dbReference type="PDB" id="6WDA">
    <property type="method" value="EM"/>
    <property type="resolution" value="3.80 A"/>
    <property type="chains" value="O=5-102"/>
</dbReference>
<dbReference type="PDB" id="6WDB">
    <property type="method" value="EM"/>
    <property type="resolution" value="4.00 A"/>
    <property type="chains" value="O=5-102"/>
</dbReference>
<dbReference type="PDB" id="6WDC">
    <property type="method" value="EM"/>
    <property type="resolution" value="4.20 A"/>
    <property type="chains" value="O=5-102"/>
</dbReference>
<dbReference type="PDB" id="6WDD">
    <property type="method" value="EM"/>
    <property type="resolution" value="3.20 A"/>
    <property type="chains" value="O=5-102"/>
</dbReference>
<dbReference type="PDB" id="6WDE">
    <property type="method" value="EM"/>
    <property type="resolution" value="3.00 A"/>
    <property type="chains" value="O=5-102"/>
</dbReference>
<dbReference type="PDB" id="6WDF">
    <property type="method" value="EM"/>
    <property type="resolution" value="3.30 A"/>
    <property type="chains" value="O=5-102"/>
</dbReference>
<dbReference type="PDB" id="6WDG">
    <property type="method" value="EM"/>
    <property type="resolution" value="3.30 A"/>
    <property type="chains" value="O=5-102"/>
</dbReference>
<dbReference type="PDB" id="6WDH">
    <property type="method" value="EM"/>
    <property type="resolution" value="4.30 A"/>
    <property type="chains" value="O=5-102"/>
</dbReference>
<dbReference type="PDB" id="6WDI">
    <property type="method" value="EM"/>
    <property type="resolution" value="4.00 A"/>
    <property type="chains" value="O=5-102"/>
</dbReference>
<dbReference type="PDB" id="6WDJ">
    <property type="method" value="EM"/>
    <property type="resolution" value="3.70 A"/>
    <property type="chains" value="O=5-102"/>
</dbReference>
<dbReference type="PDB" id="6WDK">
    <property type="method" value="EM"/>
    <property type="resolution" value="3.60 A"/>
    <property type="chains" value="O=5-102"/>
</dbReference>
<dbReference type="PDB" id="6WDL">
    <property type="method" value="EM"/>
    <property type="resolution" value="3.70 A"/>
    <property type="chains" value="O=5-102"/>
</dbReference>
<dbReference type="PDB" id="6WDM">
    <property type="method" value="EM"/>
    <property type="resolution" value="3.60 A"/>
    <property type="chains" value="O=5-102"/>
</dbReference>
<dbReference type="PDB" id="6WNV">
    <property type="method" value="EM"/>
    <property type="resolution" value="3.50 A"/>
    <property type="chains" value="O=5-102"/>
</dbReference>
<dbReference type="PDB" id="6WNW">
    <property type="method" value="EM"/>
    <property type="resolution" value="3.20 A"/>
    <property type="chains" value="O=5-102"/>
</dbReference>
<dbReference type="PDB" id="6X6T">
    <property type="method" value="EM"/>
    <property type="resolution" value="3.20 A"/>
    <property type="chains" value="P=1-103"/>
</dbReference>
<dbReference type="PDB" id="6X7F">
    <property type="method" value="EM"/>
    <property type="resolution" value="3.50 A"/>
    <property type="chains" value="P=1-103"/>
</dbReference>
<dbReference type="PDB" id="6X7K">
    <property type="method" value="EM"/>
    <property type="resolution" value="3.10 A"/>
    <property type="chains" value="P=1-103"/>
</dbReference>
<dbReference type="PDB" id="6X9Q">
    <property type="method" value="EM"/>
    <property type="resolution" value="4.80 A"/>
    <property type="chains" value="P=1-103"/>
</dbReference>
<dbReference type="PDB" id="6XDQ">
    <property type="method" value="EM"/>
    <property type="resolution" value="3.70 A"/>
    <property type="chains" value="P=1-103"/>
</dbReference>
<dbReference type="PDB" id="6XDR">
    <property type="method" value="EM"/>
    <property type="resolution" value="4.70 A"/>
    <property type="chains" value="P=1-103"/>
</dbReference>
<dbReference type="PDB" id="6XE0">
    <property type="method" value="EM"/>
    <property type="resolution" value="6.80 A"/>
    <property type="chains" value="I=5-102"/>
</dbReference>
<dbReference type="PDB" id="6XGF">
    <property type="method" value="EM"/>
    <property type="resolution" value="5.00 A"/>
    <property type="chains" value="P=1-103"/>
</dbReference>
<dbReference type="PDB" id="6XII">
    <property type="method" value="EM"/>
    <property type="resolution" value="7.00 A"/>
    <property type="chains" value="P=1-103"/>
</dbReference>
<dbReference type="PDB" id="6XIJ">
    <property type="method" value="EM"/>
    <property type="resolution" value="8.00 A"/>
    <property type="chains" value="P=1-103"/>
</dbReference>
<dbReference type="PDB" id="6XZA">
    <property type="method" value="EM"/>
    <property type="resolution" value="2.66 A"/>
    <property type="chains" value="J1=4-102"/>
</dbReference>
<dbReference type="PDB" id="6XZB">
    <property type="method" value="EM"/>
    <property type="resolution" value="2.54 A"/>
    <property type="chains" value="J1=4-102"/>
</dbReference>
<dbReference type="PDB" id="6Y69">
    <property type="method" value="EM"/>
    <property type="resolution" value="2.86 A"/>
    <property type="chains" value="j=5-102"/>
</dbReference>
<dbReference type="PDB" id="6ZTJ">
    <property type="method" value="EM"/>
    <property type="resolution" value="3.40 A"/>
    <property type="chains" value="AJ=1-103"/>
</dbReference>
<dbReference type="PDB" id="6ZTL">
    <property type="method" value="EM"/>
    <property type="resolution" value="3.50 A"/>
    <property type="chains" value="AJ=1-103"/>
</dbReference>
<dbReference type="PDB" id="6ZTM">
    <property type="method" value="EM"/>
    <property type="resolution" value="3.30 A"/>
    <property type="chains" value="AJ=1-103"/>
</dbReference>
<dbReference type="PDB" id="6ZTN">
    <property type="method" value="EM"/>
    <property type="resolution" value="3.90 A"/>
    <property type="chains" value="AJ=1-103"/>
</dbReference>
<dbReference type="PDB" id="6ZTO">
    <property type="method" value="EM"/>
    <property type="resolution" value="3.00 A"/>
    <property type="chains" value="AJ=1-103"/>
</dbReference>
<dbReference type="PDB" id="6ZTP">
    <property type="method" value="EM"/>
    <property type="resolution" value="3.00 A"/>
    <property type="chains" value="AJ=1-103"/>
</dbReference>
<dbReference type="PDB" id="6ZU1">
    <property type="method" value="EM"/>
    <property type="resolution" value="3.00 A"/>
    <property type="chains" value="AJ=1-103"/>
</dbReference>
<dbReference type="PDB" id="7ABZ">
    <property type="method" value="EM"/>
    <property type="resolution" value="3.21 A"/>
    <property type="chains" value="o=5-102"/>
</dbReference>
<dbReference type="PDB" id="7AC7">
    <property type="method" value="EM"/>
    <property type="resolution" value="3.08 A"/>
    <property type="chains" value="o=5-103"/>
</dbReference>
<dbReference type="PDB" id="7ACJ">
    <property type="method" value="EM"/>
    <property type="resolution" value="3.20 A"/>
    <property type="chains" value="o=5-103"/>
</dbReference>
<dbReference type="PDB" id="7ACR">
    <property type="method" value="EM"/>
    <property type="resolution" value="3.44 A"/>
    <property type="chains" value="o=5-103"/>
</dbReference>
<dbReference type="PDB" id="7AF3">
    <property type="method" value="EM"/>
    <property type="resolution" value="2.82 A"/>
    <property type="chains" value="J=1-103"/>
</dbReference>
<dbReference type="PDB" id="7AF5">
    <property type="method" value="EM"/>
    <property type="resolution" value="2.96 A"/>
    <property type="chains" value="J=1-103"/>
</dbReference>
<dbReference type="PDB" id="7AF8">
    <property type="method" value="EM"/>
    <property type="resolution" value="2.75 A"/>
    <property type="chains" value="J=1-103"/>
</dbReference>
<dbReference type="PDB" id="7AFA">
    <property type="method" value="EM"/>
    <property type="resolution" value="2.95 A"/>
    <property type="chains" value="J=1-103"/>
</dbReference>
<dbReference type="PDB" id="7AFD">
    <property type="method" value="EM"/>
    <property type="resolution" value="3.44 A"/>
    <property type="chains" value="J=1-103"/>
</dbReference>
<dbReference type="PDB" id="7AFH">
    <property type="method" value="EM"/>
    <property type="resolution" value="3.59 A"/>
    <property type="chains" value="J=1-103"/>
</dbReference>
<dbReference type="PDB" id="7AFK">
    <property type="method" value="EM"/>
    <property type="resolution" value="4.90 A"/>
    <property type="chains" value="J=1-103"/>
</dbReference>
<dbReference type="PDB" id="7AFN">
    <property type="method" value="EM"/>
    <property type="resolution" value="3.86 A"/>
    <property type="chains" value="J=1-103"/>
</dbReference>
<dbReference type="PDB" id="7B5K">
    <property type="method" value="EM"/>
    <property type="resolution" value="2.90 A"/>
    <property type="chains" value="j=4-102"/>
</dbReference>
<dbReference type="PDB" id="7BOE">
    <property type="method" value="EM"/>
    <property type="resolution" value="2.90 A"/>
    <property type="chains" value="J=1-103"/>
</dbReference>
<dbReference type="PDB" id="7BOH">
    <property type="method" value="EM"/>
    <property type="resolution" value="2.82 A"/>
    <property type="chains" value="J=1-103"/>
</dbReference>
<dbReference type="PDB" id="7D6Z">
    <property type="method" value="EM"/>
    <property type="resolution" value="3.40 A"/>
    <property type="chains" value="q=1-103"/>
</dbReference>
<dbReference type="PDB" id="7D80">
    <property type="method" value="EM"/>
    <property type="resolution" value="4.10 A"/>
    <property type="chains" value="K=1-103"/>
</dbReference>
<dbReference type="PDB" id="7JSS">
    <property type="method" value="EM"/>
    <property type="resolution" value="3.70 A"/>
    <property type="chains" value="O=5-102"/>
</dbReference>
<dbReference type="PDB" id="7JSW">
    <property type="method" value="EM"/>
    <property type="resolution" value="3.80 A"/>
    <property type="chains" value="O=5-102"/>
</dbReference>
<dbReference type="PDB" id="7JSZ">
    <property type="method" value="EM"/>
    <property type="resolution" value="3.70 A"/>
    <property type="chains" value="O=5-102"/>
</dbReference>
<dbReference type="PDB" id="7JT1">
    <property type="method" value="EM"/>
    <property type="resolution" value="3.30 A"/>
    <property type="chains" value="O=5-102"/>
</dbReference>
<dbReference type="PDB" id="7JT2">
    <property type="method" value="EM"/>
    <property type="resolution" value="3.50 A"/>
    <property type="chains" value="O=5-102"/>
</dbReference>
<dbReference type="PDB" id="7JT3">
    <property type="method" value="EM"/>
    <property type="resolution" value="3.70 A"/>
    <property type="chains" value="O=5-102"/>
</dbReference>
<dbReference type="PDB" id="7K00">
    <property type="method" value="EM"/>
    <property type="resolution" value="1.98 A"/>
    <property type="chains" value="J=1-103"/>
</dbReference>
<dbReference type="PDB" id="7K50">
    <property type="method" value="EM"/>
    <property type="resolution" value="3.40 A"/>
    <property type="chains" value="O=5-102"/>
</dbReference>
<dbReference type="PDB" id="7K51">
    <property type="method" value="EM"/>
    <property type="resolution" value="3.50 A"/>
    <property type="chains" value="O=5-102"/>
</dbReference>
<dbReference type="PDB" id="7K52">
    <property type="method" value="EM"/>
    <property type="resolution" value="3.40 A"/>
    <property type="chains" value="O=5-102"/>
</dbReference>
<dbReference type="PDB" id="7K53">
    <property type="method" value="EM"/>
    <property type="resolution" value="3.20 A"/>
    <property type="chains" value="O=5-102"/>
</dbReference>
<dbReference type="PDB" id="7K54">
    <property type="method" value="EM"/>
    <property type="resolution" value="3.20 A"/>
    <property type="chains" value="O=5-102"/>
</dbReference>
<dbReference type="PDB" id="7K55">
    <property type="method" value="EM"/>
    <property type="resolution" value="3.30 A"/>
    <property type="chains" value="O=5-102"/>
</dbReference>
<dbReference type="PDB" id="7LV0">
    <property type="method" value="EM"/>
    <property type="resolution" value="3.20 A"/>
    <property type="chains" value="O=5-102"/>
</dbReference>
<dbReference type="PDB" id="7M5D">
    <property type="method" value="EM"/>
    <property type="resolution" value="2.80 A"/>
    <property type="chains" value="o=5-103"/>
</dbReference>
<dbReference type="PDB" id="7N1P">
    <property type="method" value="EM"/>
    <property type="resolution" value="2.33 A"/>
    <property type="chains" value="SJ=1-103"/>
</dbReference>
<dbReference type="PDB" id="7N2C">
    <property type="method" value="EM"/>
    <property type="resolution" value="2.72 A"/>
    <property type="chains" value="SJ=1-103"/>
</dbReference>
<dbReference type="PDB" id="7N2U">
    <property type="method" value="EM"/>
    <property type="resolution" value="2.53 A"/>
    <property type="chains" value="SJ=1-103"/>
</dbReference>
<dbReference type="PDB" id="7N2V">
    <property type="method" value="EM"/>
    <property type="resolution" value="2.54 A"/>
    <property type="chains" value="SJ=1-103"/>
</dbReference>
<dbReference type="PDB" id="7N30">
    <property type="method" value="EM"/>
    <property type="resolution" value="2.66 A"/>
    <property type="chains" value="SJ=1-103"/>
</dbReference>
<dbReference type="PDB" id="7N31">
    <property type="method" value="EM"/>
    <property type="resolution" value="2.69 A"/>
    <property type="chains" value="SJ=1-103"/>
</dbReference>
<dbReference type="PDB" id="7NAR">
    <property type="method" value="EM"/>
    <property type="resolution" value="3.00 A"/>
    <property type="chains" value="J=1-103"/>
</dbReference>
<dbReference type="PDB" id="7NAT">
    <property type="method" value="EM"/>
    <property type="resolution" value="3.59 A"/>
    <property type="chains" value="J=1-103"/>
</dbReference>
<dbReference type="PDB" id="7NAU">
    <property type="method" value="EM"/>
    <property type="resolution" value="3.78 A"/>
    <property type="chains" value="J=1-103"/>
</dbReference>
<dbReference type="PDB" id="7NAV">
    <property type="method" value="EM"/>
    <property type="resolution" value="4.80 A"/>
    <property type="chains" value="J=1-103"/>
</dbReference>
<dbReference type="PDB" id="7NAX">
    <property type="method" value="EM"/>
    <property type="resolution" value="2.96 A"/>
    <property type="chains" value="J=1-103"/>
</dbReference>
<dbReference type="PDB" id="7NBU">
    <property type="method" value="EM"/>
    <property type="resolution" value="3.11 A"/>
    <property type="chains" value="J=5-102"/>
</dbReference>
<dbReference type="PDB" id="7O19">
    <property type="method" value="EM"/>
    <property type="resolution" value="2.90 A"/>
    <property type="chains" value="AJ=1-103"/>
</dbReference>
<dbReference type="PDB" id="7O1A">
    <property type="method" value="EM"/>
    <property type="resolution" value="2.40 A"/>
    <property type="chains" value="AJ=1-103"/>
</dbReference>
<dbReference type="PDB" id="7O1C">
    <property type="method" value="EM"/>
    <property type="resolution" value="2.60 A"/>
    <property type="chains" value="AJ=1-103"/>
</dbReference>
<dbReference type="PDB" id="7OE0">
    <property type="method" value="EM"/>
    <property type="resolution" value="2.69 A"/>
    <property type="chains" value="J=1-103"/>
</dbReference>
<dbReference type="PDB" id="7OE1">
    <property type="method" value="EM"/>
    <property type="resolution" value="3.05 A"/>
    <property type="chains" value="J=1-103"/>
</dbReference>
<dbReference type="PDB" id="7OIZ">
    <property type="method" value="EM"/>
    <property type="resolution" value="2.90 A"/>
    <property type="chains" value="J=1-103"/>
</dbReference>
<dbReference type="PDB" id="7OJ0">
    <property type="method" value="EM"/>
    <property type="resolution" value="3.50 A"/>
    <property type="chains" value="J=1-103"/>
</dbReference>
<dbReference type="PDB" id="7P3K">
    <property type="method" value="EM"/>
    <property type="resolution" value="2.90 A"/>
    <property type="chains" value="J=1-103"/>
</dbReference>
<dbReference type="PDB" id="7PJU">
    <property type="method" value="EM"/>
    <property type="resolution" value="9.50 A"/>
    <property type="chains" value="j=1-103"/>
</dbReference>
<dbReference type="PDB" id="7PJV">
    <property type="method" value="EM"/>
    <property type="resolution" value="3.10 A"/>
    <property type="chains" value="j=1-103"/>
</dbReference>
<dbReference type="PDB" id="7PJY">
    <property type="method" value="EM"/>
    <property type="resolution" value="3.10 A"/>
    <property type="chains" value="j=1-103"/>
</dbReference>
<dbReference type="PDB" id="7QG8">
    <property type="method" value="EM"/>
    <property type="resolution" value="3.97 A"/>
    <property type="chains" value="9=1-103"/>
</dbReference>
<dbReference type="PDB" id="7QGN">
    <property type="method" value="EM"/>
    <property type="resolution" value="3.37 A"/>
    <property type="chains" value="9=1-103"/>
</dbReference>
<dbReference type="PDB" id="7QGR">
    <property type="method" value="EM"/>
    <property type="resolution" value="5.70 A"/>
    <property type="chains" value="9=1-103"/>
</dbReference>
<dbReference type="PDB" id="7S1G">
    <property type="method" value="EM"/>
    <property type="resolution" value="2.48 A"/>
    <property type="chains" value="q=1-103"/>
</dbReference>
<dbReference type="PDB" id="7S1H">
    <property type="method" value="EM"/>
    <property type="resolution" value="2.35 A"/>
    <property type="chains" value="q=1-103"/>
</dbReference>
<dbReference type="PDB" id="7S1I">
    <property type="method" value="EM"/>
    <property type="resolution" value="2.48 A"/>
    <property type="chains" value="q=1-103"/>
</dbReference>
<dbReference type="PDB" id="7S1J">
    <property type="method" value="EM"/>
    <property type="resolution" value="2.47 A"/>
    <property type="chains" value="q=1-103"/>
</dbReference>
<dbReference type="PDB" id="7S1K">
    <property type="method" value="EM"/>
    <property type="resolution" value="2.42 A"/>
    <property type="chains" value="q=1-103"/>
</dbReference>
<dbReference type="PDB" id="7SA4">
    <property type="method" value="EM"/>
    <property type="resolution" value="2.55 A"/>
    <property type="chains" value="o=1-103"/>
</dbReference>
<dbReference type="PDB" id="7SS9">
    <property type="method" value="EM"/>
    <property type="resolution" value="3.90 A"/>
    <property type="chains" value="O=5-102"/>
</dbReference>
<dbReference type="PDB" id="7SSD">
    <property type="method" value="EM"/>
    <property type="resolution" value="3.30 A"/>
    <property type="chains" value="O=5-102"/>
</dbReference>
<dbReference type="PDB" id="7SSL">
    <property type="method" value="EM"/>
    <property type="resolution" value="3.80 A"/>
    <property type="chains" value="O=5-102"/>
</dbReference>
<dbReference type="PDB" id="7SSN">
    <property type="method" value="EM"/>
    <property type="resolution" value="3.20 A"/>
    <property type="chains" value="O=5-102"/>
</dbReference>
<dbReference type="PDB" id="7SSO">
    <property type="method" value="EM"/>
    <property type="resolution" value="3.20 A"/>
    <property type="chains" value="O=5-102"/>
</dbReference>
<dbReference type="PDB" id="7SSW">
    <property type="method" value="EM"/>
    <property type="resolution" value="3.80 A"/>
    <property type="chains" value="O=5-102"/>
</dbReference>
<dbReference type="PDB" id="7ST2">
    <property type="method" value="EM"/>
    <property type="resolution" value="2.90 A"/>
    <property type="chains" value="O=5-102"/>
</dbReference>
<dbReference type="PDB" id="7ST6">
    <property type="method" value="EM"/>
    <property type="resolution" value="3.00 A"/>
    <property type="chains" value="O=5-102"/>
</dbReference>
<dbReference type="PDB" id="7ST7">
    <property type="method" value="EM"/>
    <property type="resolution" value="3.20 A"/>
    <property type="chains" value="O=5-102"/>
</dbReference>
<dbReference type="PDB" id="7TOS">
    <property type="method" value="EM"/>
    <property type="resolution" value="2.90 A"/>
    <property type="chains" value="S10=5-102"/>
</dbReference>
<dbReference type="PDB" id="7UG7">
    <property type="method" value="EM"/>
    <property type="resolution" value="2.58 A"/>
    <property type="chains" value="SJ=1-103"/>
</dbReference>
<dbReference type="PDB" id="7UPH">
    <property type="method" value="EM"/>
    <property type="resolution" value="4.18 A"/>
    <property type="chains" value="e=5-102"/>
</dbReference>
<dbReference type="PDB" id="7Y7C">
    <property type="method" value="EM"/>
    <property type="resolution" value="2.51 A"/>
    <property type="chains" value="J=1-103"/>
</dbReference>
<dbReference type="PDB" id="7Y7D">
    <property type="method" value="EM"/>
    <property type="resolution" value="2.58 A"/>
    <property type="chains" value="J=1-103"/>
</dbReference>
<dbReference type="PDB" id="7Y7E">
    <property type="method" value="EM"/>
    <property type="resolution" value="2.41 A"/>
    <property type="chains" value="J=1-103"/>
</dbReference>
<dbReference type="PDB" id="7Y7F">
    <property type="method" value="EM"/>
    <property type="resolution" value="2.43 A"/>
    <property type="chains" value="J=1-103"/>
</dbReference>
<dbReference type="PDB" id="7Y7G">
    <property type="method" value="EM"/>
    <property type="resolution" value="2.34 A"/>
    <property type="chains" value="J=1-103"/>
</dbReference>
<dbReference type="PDB" id="7Y7H">
    <property type="method" value="EM"/>
    <property type="resolution" value="2.51 A"/>
    <property type="chains" value="J=1-103"/>
</dbReference>
<dbReference type="PDB" id="7ZTA">
    <property type="method" value="EM"/>
    <property type="resolution" value="2.70 A"/>
    <property type="chains" value="S101=4-102"/>
</dbReference>
<dbReference type="PDB" id="8A3L">
    <property type="method" value="EM"/>
    <property type="resolution" value="3.42 A"/>
    <property type="chains" value="J=1-103"/>
</dbReference>
<dbReference type="PDB" id="8AKN">
    <property type="method" value="EM"/>
    <property type="resolution" value="2.30 A"/>
    <property type="chains" value="K=1-103"/>
</dbReference>
<dbReference type="PDB" id="8AM9">
    <property type="method" value="EM"/>
    <property type="resolution" value="2.80 A"/>
    <property type="chains" value="K=1-103"/>
</dbReference>
<dbReference type="PDB" id="8AYE">
    <property type="method" value="EM"/>
    <property type="resolution" value="1.96 A"/>
    <property type="chains" value="J=1-103"/>
</dbReference>
<dbReference type="PDB" id="8B0X">
    <property type="method" value="EM"/>
    <property type="resolution" value="1.55 A"/>
    <property type="chains" value="J=1-103"/>
</dbReference>
<dbReference type="PDB" id="8B7Y">
    <property type="method" value="EM"/>
    <property type="resolution" value="3.00 A"/>
    <property type="chains" value="o=1-103"/>
</dbReference>
<dbReference type="PDB" id="8BF7">
    <property type="method" value="EM"/>
    <property type="resolution" value="2.33 A"/>
    <property type="chains" value="n=1-103"/>
</dbReference>
<dbReference type="PDB" id="8BGE">
    <property type="method" value="EM"/>
    <property type="resolution" value="2.11 A"/>
    <property type="chains" value="n=1-103"/>
</dbReference>
<dbReference type="PDB" id="8BGH">
    <property type="method" value="EM"/>
    <property type="resolution" value="2.88 A"/>
    <property type="chains" value="n=1-103"/>
</dbReference>
<dbReference type="PDB" id="8BH4">
    <property type="method" value="EM"/>
    <property type="resolution" value="2.62 A"/>
    <property type="chains" value="n=1-103"/>
</dbReference>
<dbReference type="PDB" id="8BHJ">
    <property type="method" value="EM"/>
    <property type="resolution" value="2.81 A"/>
    <property type="chains" value="n=1-103"/>
</dbReference>
<dbReference type="PDB" id="8BHL">
    <property type="method" value="EM"/>
    <property type="resolution" value="2.21 A"/>
    <property type="chains" value="n=1-103"/>
</dbReference>
<dbReference type="PDB" id="8BHN">
    <property type="method" value="EM"/>
    <property type="resolution" value="2.85 A"/>
    <property type="chains" value="n=1-103"/>
</dbReference>
<dbReference type="PDB" id="8BHP">
    <property type="method" value="EM"/>
    <property type="resolution" value="2.37 A"/>
    <property type="chains" value="n=1-103"/>
</dbReference>
<dbReference type="PDB" id="8BIL">
    <property type="method" value="EM"/>
    <property type="resolution" value="2.04 A"/>
    <property type="chains" value="n=1-103"/>
</dbReference>
<dbReference type="PDB" id="8BIM">
    <property type="method" value="EM"/>
    <property type="resolution" value="2.04 A"/>
    <property type="chains" value="n=1-103"/>
</dbReference>
<dbReference type="PDB" id="8CA7">
    <property type="method" value="EM"/>
    <property type="resolution" value="2.06 A"/>
    <property type="chains" value="J=1-103"/>
</dbReference>
<dbReference type="PDB" id="8CAZ">
    <property type="method" value="EM"/>
    <property type="resolution" value="2.11 A"/>
    <property type="chains" value="J=1-103"/>
</dbReference>
<dbReference type="PDB" id="8CF1">
    <property type="method" value="EM"/>
    <property type="resolution" value="1.82 A"/>
    <property type="chains" value="J=1-103"/>
</dbReference>
<dbReference type="PDB" id="8CF8">
    <property type="method" value="EM"/>
    <property type="resolution" value="2.20 A"/>
    <property type="chains" value="J=1-103"/>
</dbReference>
<dbReference type="PDB" id="8CGI">
    <property type="method" value="EM"/>
    <property type="resolution" value="1.89 A"/>
    <property type="chains" value="J=1-103"/>
</dbReference>
<dbReference type="PDB" id="8EIU">
    <property type="method" value="EM"/>
    <property type="resolution" value="2.24 A"/>
    <property type="chains" value="J=1-103"/>
</dbReference>
<dbReference type="PDB" id="8EKC">
    <property type="method" value="EM"/>
    <property type="resolution" value="2.70 A"/>
    <property type="chains" value="j=1-103"/>
</dbReference>
<dbReference type="PDB" id="8EMM">
    <property type="method" value="EM"/>
    <property type="resolution" value="2.10 A"/>
    <property type="chains" value="J=1-103"/>
</dbReference>
<dbReference type="PDB" id="8EYQ">
    <property type="method" value="EM"/>
    <property type="resolution" value="3.30 A"/>
    <property type="chains" value="J=1-103"/>
</dbReference>
<dbReference type="PDB" id="8EYT">
    <property type="method" value="EM"/>
    <property type="resolution" value="2.80 A"/>
    <property type="chains" value="J=1-103"/>
</dbReference>
<dbReference type="PDB" id="8FIZ">
    <property type="method" value="EM"/>
    <property type="resolution" value="3.80 A"/>
    <property type="chains" value="AH=1-103"/>
</dbReference>
<dbReference type="PDB" id="8FTO">
    <property type="method" value="EM"/>
    <property type="resolution" value="1.85 A"/>
    <property type="chains" value="J=1-103"/>
</dbReference>
<dbReference type="PDB" id="8FZD">
    <property type="method" value="EM"/>
    <property type="resolution" value="3.10 A"/>
    <property type="chains" value="j=1-103"/>
</dbReference>
<dbReference type="PDB" id="8FZE">
    <property type="method" value="EM"/>
    <property type="resolution" value="3.00 A"/>
    <property type="chains" value="j=1-103"/>
</dbReference>
<dbReference type="PDB" id="8FZF">
    <property type="method" value="EM"/>
    <property type="resolution" value="3.20 A"/>
    <property type="chains" value="j=1-103"/>
</dbReference>
<dbReference type="PDB" id="8FZG">
    <property type="method" value="EM"/>
    <property type="resolution" value="3.10 A"/>
    <property type="chains" value="j=1-103"/>
</dbReference>
<dbReference type="PDB" id="8FZH">
    <property type="method" value="EM"/>
    <property type="resolution" value="2.90 A"/>
    <property type="chains" value="j=1-103"/>
</dbReference>
<dbReference type="PDB" id="8FZI">
    <property type="method" value="EM"/>
    <property type="resolution" value="3.10 A"/>
    <property type="chains" value="j=1-103"/>
</dbReference>
<dbReference type="PDB" id="8FZJ">
    <property type="method" value="EM"/>
    <property type="resolution" value="3.00 A"/>
    <property type="chains" value="j=1-103"/>
</dbReference>
<dbReference type="PDB" id="8G2U">
    <property type="method" value="EM"/>
    <property type="resolution" value="3.00 A"/>
    <property type="chains" value="i=5-102"/>
</dbReference>
<dbReference type="PDB" id="8G31">
    <property type="method" value="EM"/>
    <property type="resolution" value="3.20 A"/>
    <property type="chains" value="i=5-102"/>
</dbReference>
<dbReference type="PDB" id="8G34">
    <property type="method" value="EM"/>
    <property type="resolution" value="3.20 A"/>
    <property type="chains" value="i=5-102"/>
</dbReference>
<dbReference type="PDB" id="8G38">
    <property type="method" value="EM"/>
    <property type="resolution" value="3.20 A"/>
    <property type="chains" value="i=5-102"/>
</dbReference>
<dbReference type="PDB" id="8G6W">
    <property type="method" value="EM"/>
    <property type="resolution" value="2.02 A"/>
    <property type="chains" value="J=1-103"/>
</dbReference>
<dbReference type="PDB" id="8G7P">
    <property type="method" value="EM"/>
    <property type="resolution" value="2.90 A"/>
    <property type="chains" value="j=1-103"/>
</dbReference>
<dbReference type="PDB" id="8G7Q">
    <property type="method" value="EM"/>
    <property type="resolution" value="3.10 A"/>
    <property type="chains" value="j=1-103"/>
</dbReference>
<dbReference type="PDB" id="8G7R">
    <property type="method" value="EM"/>
    <property type="resolution" value="2.80 A"/>
    <property type="chains" value="j=1-103"/>
</dbReference>
<dbReference type="PDB" id="8G7S">
    <property type="method" value="EM"/>
    <property type="resolution" value="3.10 A"/>
    <property type="chains" value="j=1-103"/>
</dbReference>
<dbReference type="PDB" id="8HSP">
    <property type="method" value="EM"/>
    <property type="resolution" value="2.32 A"/>
    <property type="chains" value="J=1-103"/>
</dbReference>
<dbReference type="PDB" id="8HTZ">
    <property type="method" value="EM"/>
    <property type="resolution" value="2.40 A"/>
    <property type="chains" value="J=1-103"/>
</dbReference>
<dbReference type="PDB" id="8HU1">
    <property type="method" value="EM"/>
    <property type="resolution" value="2.69 A"/>
    <property type="chains" value="J=1-103"/>
</dbReference>
<dbReference type="PDB" id="8IFB">
    <property type="method" value="EM"/>
    <property type="resolution" value="2.43 A"/>
    <property type="chains" value="J=1-103"/>
</dbReference>
<dbReference type="PDB" id="8IFC">
    <property type="method" value="EM"/>
    <property type="resolution" value="2.90 A"/>
    <property type="chains" value="J=1-103"/>
</dbReference>
<dbReference type="PDB" id="8JSG">
    <property type="method" value="EM"/>
    <property type="resolution" value="4.60 A"/>
    <property type="chains" value="r=1-102"/>
</dbReference>
<dbReference type="PDB" id="8K3O">
    <property type="method" value="EM"/>
    <property type="resolution" value="3.88 A"/>
    <property type="chains" value="J=1-103"/>
</dbReference>
<dbReference type="PDB" id="8K4E">
    <property type="method" value="EM"/>
    <property type="resolution" value="3.40 A"/>
    <property type="chains" value="J=1-103"/>
</dbReference>
<dbReference type="PDB" id="8P16">
    <property type="method" value="EM"/>
    <property type="resolution" value="2.77 A"/>
    <property type="chains" value="o=1-103"/>
</dbReference>
<dbReference type="PDB" id="8P17">
    <property type="method" value="EM"/>
    <property type="resolution" value="2.78 A"/>
    <property type="chains" value="o=1-103"/>
</dbReference>
<dbReference type="PDB" id="8P18">
    <property type="method" value="EM"/>
    <property type="resolution" value="2.77 A"/>
    <property type="chains" value="o=1-103"/>
</dbReference>
<dbReference type="PDB" id="8PEG">
    <property type="method" value="EM"/>
    <property type="resolution" value="3.30 A"/>
    <property type="chains" value="J=1-103"/>
</dbReference>
<dbReference type="PDB" id="8PHJ">
    <property type="method" value="EM"/>
    <property type="resolution" value="3.67 A"/>
    <property type="chains" value="J=1-103"/>
</dbReference>
<dbReference type="PDB" id="8PKL">
    <property type="method" value="EM"/>
    <property type="resolution" value="3.09 A"/>
    <property type="chains" value="J=1-103"/>
</dbReference>
<dbReference type="PDB" id="8PVA">
    <property type="method" value="EM"/>
    <property type="resolution" value="4.50 A"/>
    <property type="chains" value="J=1-103"/>
</dbReference>
<dbReference type="PDB" id="8Q4F">
    <property type="method" value="EM"/>
    <property type="resolution" value="3.10 A"/>
    <property type="chains" value="J=1-103"/>
</dbReference>
<dbReference type="PDB" id="8QK7">
    <property type="method" value="EM"/>
    <property type="resolution" value="2.77 A"/>
    <property type="chains" value="o=1-103"/>
</dbReference>
<dbReference type="PDB" id="8QOA">
    <property type="method" value="EM"/>
    <property type="resolution" value="2.00 A"/>
    <property type="chains" value="J=1-103"/>
</dbReference>
<dbReference type="PDB" id="8R3V">
    <property type="method" value="EM"/>
    <property type="resolution" value="3.28 A"/>
    <property type="chains" value="J1/J2=1-103"/>
</dbReference>
<dbReference type="PDB" id="8R6C">
    <property type="method" value="EM"/>
    <property type="resolution" value="2.20 A"/>
    <property type="chains" value="J=1-103"/>
</dbReference>
<dbReference type="PDB" id="8R8M">
    <property type="method" value="EM"/>
    <property type="resolution" value="2.40 A"/>
    <property type="chains" value="J=1-103"/>
</dbReference>
<dbReference type="PDB" id="8RCL">
    <property type="method" value="EM"/>
    <property type="resolution" value="3.49 A"/>
    <property type="chains" value="J1/J2=1-103"/>
</dbReference>
<dbReference type="PDB" id="8RCM">
    <property type="method" value="EM"/>
    <property type="resolution" value="3.59 A"/>
    <property type="chains" value="J1/J2=1-103"/>
</dbReference>
<dbReference type="PDB" id="8RCS">
    <property type="method" value="EM"/>
    <property type="resolution" value="4.46 A"/>
    <property type="chains" value="J1/J2=1-103"/>
</dbReference>
<dbReference type="PDB" id="8RCT">
    <property type="method" value="EM"/>
    <property type="resolution" value="5.32 A"/>
    <property type="chains" value="J1/J2=1-103"/>
</dbReference>
<dbReference type="PDB" id="8SYL">
    <property type="method" value="EM"/>
    <property type="resolution" value="2.90 A"/>
    <property type="chains" value="j=1-103"/>
</dbReference>
<dbReference type="PDB" id="8T5D">
    <property type="method" value="EM"/>
    <property type="resolution" value="3.20 A"/>
    <property type="chains" value="i=5-102"/>
</dbReference>
<dbReference type="PDB" id="8T5H">
    <property type="method" value="EM"/>
    <property type="resolution" value="3.30 A"/>
    <property type="chains" value="i=5-102"/>
</dbReference>
<dbReference type="PDB" id="8UPO">
    <property type="method" value="EM"/>
    <property type="resolution" value="5.50 A"/>
    <property type="chains" value="P=1-103"/>
</dbReference>
<dbReference type="PDB" id="8UPR">
    <property type="method" value="EM"/>
    <property type="resolution" value="5.30 A"/>
    <property type="chains" value="P=1-103"/>
</dbReference>
<dbReference type="PDB" id="8UQL">
    <property type="method" value="EM"/>
    <property type="resolution" value="3.20 A"/>
    <property type="chains" value="P=1-103"/>
</dbReference>
<dbReference type="PDB" id="8UQM">
    <property type="method" value="EM"/>
    <property type="resolution" value="5.30 A"/>
    <property type="chains" value="P=1-103"/>
</dbReference>
<dbReference type="PDB" id="8UQP">
    <property type="method" value="EM"/>
    <property type="resolution" value="3.80 A"/>
    <property type="chains" value="P=1-103"/>
</dbReference>
<dbReference type="PDB" id="8UR0">
    <property type="method" value="EM"/>
    <property type="resolution" value="3.40 A"/>
    <property type="chains" value="P=1-103"/>
</dbReference>
<dbReference type="PDB" id="8URH">
    <property type="method" value="EM"/>
    <property type="resolution" value="5.70 A"/>
    <property type="chains" value="P=1-103"/>
</dbReference>
<dbReference type="PDB" id="8URI">
    <property type="method" value="EM"/>
    <property type="resolution" value="5.30 A"/>
    <property type="chains" value="P=1-103"/>
</dbReference>
<dbReference type="PDB" id="8URX">
    <property type="method" value="EM"/>
    <property type="resolution" value="6.60 A"/>
    <property type="chains" value="P=1-103"/>
</dbReference>
<dbReference type="PDB" id="8URY">
    <property type="method" value="EM"/>
    <property type="resolution" value="3.10 A"/>
    <property type="chains" value="P=5-103"/>
</dbReference>
<dbReference type="PDB" id="8VS9">
    <property type="method" value="EM"/>
    <property type="resolution" value="3.90 A"/>
    <property type="chains" value="S10=1-103"/>
</dbReference>
<dbReference type="PDB" id="8VSA">
    <property type="method" value="EM"/>
    <property type="resolution" value="3.70 A"/>
    <property type="chains" value="S10=1-103"/>
</dbReference>
<dbReference type="PDB" id="8YUO">
    <property type="method" value="EM"/>
    <property type="resolution" value="2.25 A"/>
    <property type="chains" value="J=1-103"/>
</dbReference>
<dbReference type="PDB" id="8YUP">
    <property type="method" value="EM"/>
    <property type="resolution" value="2.39 A"/>
    <property type="chains" value="J=1-103"/>
</dbReference>
<dbReference type="PDB" id="8YUQ">
    <property type="method" value="EM"/>
    <property type="resolution" value="2.41 A"/>
    <property type="chains" value="J=1-103"/>
</dbReference>
<dbReference type="PDB" id="8YUR">
    <property type="method" value="EM"/>
    <property type="resolution" value="2.47 A"/>
    <property type="chains" value="J=1-103"/>
</dbReference>
<dbReference type="PDB" id="8YUS">
    <property type="method" value="EM"/>
    <property type="resolution" value="2.43 A"/>
    <property type="chains" value="J=1-103"/>
</dbReference>
<dbReference type="PDB" id="9DUK">
    <property type="method" value="EM"/>
    <property type="resolution" value="2.56 A"/>
    <property type="chains" value="J=1-103"/>
</dbReference>
<dbReference type="PDB" id="9DUL">
    <property type="method" value="EM"/>
    <property type="resolution" value="2.56 A"/>
    <property type="chains" value="J=1-103"/>
</dbReference>
<dbReference type="PDB" id="9FBV">
    <property type="method" value="EM"/>
    <property type="resolution" value="2.40 A"/>
    <property type="chains" value="J=1-103"/>
</dbReference>
<dbReference type="PDB" id="9GFT">
    <property type="method" value="EM"/>
    <property type="resolution" value="3.10 A"/>
    <property type="chains" value="9/AJ=1-103"/>
</dbReference>
<dbReference type="PDB" id="9GGR">
    <property type="method" value="EM"/>
    <property type="resolution" value="3.20 A"/>
    <property type="chains" value="9/AJ=1-103"/>
</dbReference>
<dbReference type="PDB" id="9GUP">
    <property type="method" value="EM"/>
    <property type="resolution" value="2.80 A"/>
    <property type="chains" value="K=1-103"/>
</dbReference>
<dbReference type="PDB" id="9GUQ">
    <property type="method" value="EM"/>
    <property type="resolution" value="3.10 A"/>
    <property type="chains" value="K=1-103"/>
</dbReference>
<dbReference type="PDB" id="9GUS">
    <property type="method" value="EM"/>
    <property type="resolution" value="3.50 A"/>
    <property type="chains" value="K=1-103"/>
</dbReference>
<dbReference type="PDB" id="9GUT">
    <property type="method" value="EM"/>
    <property type="resolution" value="2.80 A"/>
    <property type="chains" value="K=1-103"/>
</dbReference>
<dbReference type="PDB" id="9GUU">
    <property type="method" value="EM"/>
    <property type="resolution" value="2.50 A"/>
    <property type="chains" value="K=1-103"/>
</dbReference>
<dbReference type="PDB" id="9GUV">
    <property type="method" value="EM"/>
    <property type="resolution" value="3.00 A"/>
    <property type="chains" value="K=1-103"/>
</dbReference>
<dbReference type="PDB" id="9GUW">
    <property type="method" value="EM"/>
    <property type="resolution" value="3.10 A"/>
    <property type="chains" value="K=1-103"/>
</dbReference>
<dbReference type="PDB" id="9GUX">
    <property type="method" value="EM"/>
    <property type="resolution" value="3.30 A"/>
    <property type="chains" value="K=1-103"/>
</dbReference>
<dbReference type="PDB" id="9MOR">
    <property type="method" value="EM"/>
    <property type="resolution" value="2.65 A"/>
    <property type="chains" value="o=1-103"/>
</dbReference>
<dbReference type="PDB" id="9MQ4">
    <property type="method" value="EM"/>
    <property type="resolution" value="2.78 A"/>
    <property type="chains" value="o=1-103"/>
</dbReference>
<dbReference type="PDBsum" id="2KVQ"/>
<dbReference type="PDBsum" id="2YKR"/>
<dbReference type="PDBsum" id="3D3B"/>
<dbReference type="PDBsum" id="3D3C"/>
<dbReference type="PDBsum" id="3IMQ"/>
<dbReference type="PDBsum" id="3J9Y"/>
<dbReference type="PDBsum" id="3J9Z"/>
<dbReference type="PDBsum" id="3JA1"/>
<dbReference type="PDBsum" id="3JBU"/>
<dbReference type="PDBsum" id="3JBV"/>
<dbReference type="PDBsum" id="3JCD"/>
<dbReference type="PDBsum" id="3JCE"/>
<dbReference type="PDBsum" id="3JCJ"/>
<dbReference type="PDBsum" id="3JCN"/>
<dbReference type="PDBsum" id="3W1Y"/>
<dbReference type="PDBsum" id="4A2I"/>
<dbReference type="PDBsum" id="4ADV"/>
<dbReference type="PDBsum" id="4U1U"/>
<dbReference type="PDBsum" id="4U1V"/>
<dbReference type="PDBsum" id="4U20"/>
<dbReference type="PDBsum" id="4U24"/>
<dbReference type="PDBsum" id="4U25"/>
<dbReference type="PDBsum" id="4U26"/>
<dbReference type="PDBsum" id="4U27"/>
<dbReference type="PDBsum" id="4V47"/>
<dbReference type="PDBsum" id="4V48"/>
<dbReference type="PDBsum" id="4V4H"/>
<dbReference type="PDBsum" id="4V4Q"/>
<dbReference type="PDBsum" id="4V4V"/>
<dbReference type="PDBsum" id="4V4W"/>
<dbReference type="PDBsum" id="4V50"/>
<dbReference type="PDBsum" id="4V52"/>
<dbReference type="PDBsum" id="4V53"/>
<dbReference type="PDBsum" id="4V54"/>
<dbReference type="PDBsum" id="4V55"/>
<dbReference type="PDBsum" id="4V56"/>
<dbReference type="PDBsum" id="4V57"/>
<dbReference type="PDBsum" id="4V5B"/>
<dbReference type="PDBsum" id="4V5H"/>
<dbReference type="PDBsum" id="4V5Y"/>
<dbReference type="PDBsum" id="4V64"/>
<dbReference type="PDBsum" id="4V65"/>
<dbReference type="PDBsum" id="4V66"/>
<dbReference type="PDBsum" id="4V69"/>
<dbReference type="PDBsum" id="4V6C"/>
<dbReference type="PDBsum" id="4V6D"/>
<dbReference type="PDBsum" id="4V6E"/>
<dbReference type="PDBsum" id="4V6K"/>
<dbReference type="PDBsum" id="4V6L"/>
<dbReference type="PDBsum" id="4V6M"/>
<dbReference type="PDBsum" id="4V6N"/>
<dbReference type="PDBsum" id="4V6O"/>
<dbReference type="PDBsum" id="4V6P"/>
<dbReference type="PDBsum" id="4V6Q"/>
<dbReference type="PDBsum" id="4V6R"/>
<dbReference type="PDBsum" id="4V6S"/>
<dbReference type="PDBsum" id="4V6T"/>
<dbReference type="PDBsum" id="4V6V"/>
<dbReference type="PDBsum" id="4V6Y"/>
<dbReference type="PDBsum" id="4V6Z"/>
<dbReference type="PDBsum" id="4V70"/>
<dbReference type="PDBsum" id="4V71"/>
<dbReference type="PDBsum" id="4V72"/>
<dbReference type="PDBsum" id="4V73"/>
<dbReference type="PDBsum" id="4V74"/>
<dbReference type="PDBsum" id="4V75"/>
<dbReference type="PDBsum" id="4V76"/>
<dbReference type="PDBsum" id="4V77"/>
<dbReference type="PDBsum" id="4V78"/>
<dbReference type="PDBsum" id="4V79"/>
<dbReference type="PDBsum" id="4V7A"/>
<dbReference type="PDBsum" id="4V7B"/>
<dbReference type="PDBsum" id="4V7C"/>
<dbReference type="PDBsum" id="4V7D"/>
<dbReference type="PDBsum" id="4V7I"/>
<dbReference type="PDBsum" id="4V7S"/>
<dbReference type="PDBsum" id="4V7T"/>
<dbReference type="PDBsum" id="4V7U"/>
<dbReference type="PDBsum" id="4V7V"/>
<dbReference type="PDBsum" id="4V85"/>
<dbReference type="PDBsum" id="4V89"/>
<dbReference type="PDBsum" id="4V9C"/>
<dbReference type="PDBsum" id="4V9D"/>
<dbReference type="PDBsum" id="4V9O"/>
<dbReference type="PDBsum" id="4V9P"/>
<dbReference type="PDBsum" id="4WF1"/>
<dbReference type="PDBsum" id="4WOI"/>
<dbReference type="PDBsum" id="4WWW"/>
<dbReference type="PDBsum" id="4YBB"/>
<dbReference type="PDBsum" id="5AFI"/>
<dbReference type="PDBsum" id="5H5U"/>
<dbReference type="PDBsum" id="5IQR"/>
<dbReference type="PDBsum" id="5IT8"/>
<dbReference type="PDBsum" id="5J5B"/>
<dbReference type="PDBsum" id="5J7L"/>
<dbReference type="PDBsum" id="5J88"/>
<dbReference type="PDBsum" id="5J8A"/>
<dbReference type="PDBsum" id="5J91"/>
<dbReference type="PDBsum" id="5JC9"/>
<dbReference type="PDBsum" id="5JTE"/>
<dbReference type="PDBsum" id="5JU8"/>
<dbReference type="PDBsum" id="5KCR"/>
<dbReference type="PDBsum" id="5KCS"/>
<dbReference type="PDBsum" id="5KPS"/>
<dbReference type="PDBsum" id="5KPV"/>
<dbReference type="PDBsum" id="5KPW"/>
<dbReference type="PDBsum" id="5KPX"/>
<dbReference type="PDBsum" id="5L3P"/>
<dbReference type="PDBsum" id="5LM7"/>
<dbReference type="PDBsum" id="5LZA"/>
<dbReference type="PDBsum" id="5LZB"/>
<dbReference type="PDBsum" id="5LZC"/>
<dbReference type="PDBsum" id="5LZD"/>
<dbReference type="PDBsum" id="5LZE"/>
<dbReference type="PDBsum" id="5LZF"/>
<dbReference type="PDBsum" id="5MDV"/>
<dbReference type="PDBsum" id="5MDW"/>
<dbReference type="PDBsum" id="5MDY"/>
<dbReference type="PDBsum" id="5MDZ"/>
<dbReference type="PDBsum" id="5ME0"/>
<dbReference type="PDBsum" id="5ME1"/>
<dbReference type="PDBsum" id="5MGP"/>
<dbReference type="PDBsum" id="5MS0"/>
<dbReference type="PDBsum" id="5MY1"/>
<dbReference type="PDBsum" id="5NO2"/>
<dbReference type="PDBsum" id="5NO3"/>
<dbReference type="PDBsum" id="5NO4"/>
<dbReference type="PDBsum" id="5NP6"/>
<dbReference type="PDBsum" id="5NWY"/>
<dbReference type="PDBsum" id="5O2R"/>
<dbReference type="PDBsum" id="5U4I"/>
<dbReference type="PDBsum" id="5U9F"/>
<dbReference type="PDBsum" id="5U9G"/>
<dbReference type="PDBsum" id="5UYK"/>
<dbReference type="PDBsum" id="5UYL"/>
<dbReference type="PDBsum" id="5UYM"/>
<dbReference type="PDBsum" id="5UYN"/>
<dbReference type="PDBsum" id="5UYP"/>
<dbReference type="PDBsum" id="5UYQ"/>
<dbReference type="PDBsum" id="5UZ4"/>
<dbReference type="PDBsum" id="5WDT"/>
<dbReference type="PDBsum" id="5WE4"/>
<dbReference type="PDBsum" id="5WE6"/>
<dbReference type="PDBsum" id="5WF0"/>
<dbReference type="PDBsum" id="5WFK"/>
<dbReference type="PDBsum" id="5WFS"/>
<dbReference type="PDBsum" id="6AWB"/>
<dbReference type="PDBsum" id="6AWC"/>
<dbReference type="PDBsum" id="6AWD"/>
<dbReference type="PDBsum" id="6BU8"/>
<dbReference type="PDBsum" id="6BY1"/>
<dbReference type="PDBsum" id="6C4I"/>
<dbReference type="PDBsum" id="6DNC"/>
<dbReference type="PDBsum" id="6ENF"/>
<dbReference type="PDBsum" id="6ENJ"/>
<dbReference type="PDBsum" id="6ENU"/>
<dbReference type="PDBsum" id="6GOV"/>
<dbReference type="PDBsum" id="6GWT"/>
<dbReference type="PDBsum" id="6GXM"/>
<dbReference type="PDBsum" id="6GXN"/>
<dbReference type="PDBsum" id="6GXO"/>
<dbReference type="PDBsum" id="6GXP"/>
<dbReference type="PDBsum" id="6H4N"/>
<dbReference type="PDBsum" id="6H58"/>
<dbReference type="PDBsum" id="6HRM"/>
<dbReference type="PDBsum" id="6I7V"/>
<dbReference type="PDBsum" id="6NQB"/>
<dbReference type="PDBsum" id="6O7K"/>
<dbReference type="PDBsum" id="6O9J"/>
<dbReference type="PDBsum" id="6O9K"/>
<dbReference type="PDBsum" id="6OFX"/>
<dbReference type="PDBsum" id="6OG7"/>
<dbReference type="PDBsum" id="6OGF"/>
<dbReference type="PDBsum" id="6OGG"/>
<dbReference type="PDBsum" id="6OGI"/>
<dbReference type="PDBsum" id="6OM6"/>
<dbReference type="PDBsum" id="6ORE"/>
<dbReference type="PDBsum" id="6ORL"/>
<dbReference type="PDBsum" id="6OSK"/>
<dbReference type="PDBsum" id="6OSQ"/>
<dbReference type="PDBsum" id="6OST"/>
<dbReference type="PDBsum" id="6OT3"/>
<dbReference type="PDBsum" id="6OUO"/>
<dbReference type="PDBsum" id="6Q97"/>
<dbReference type="PDBsum" id="6Q98"/>
<dbReference type="PDBsum" id="6Q9A"/>
<dbReference type="PDBsum" id="6SZS"/>
<dbReference type="PDBsum" id="6TBV"/>
<dbReference type="PDBsum" id="6TC3"/>
<dbReference type="PDBsum" id="6TQN"/>
<dbReference type="PDBsum" id="6TQO"/>
<dbReference type="PDBsum" id="6VU3"/>
<dbReference type="PDBsum" id="6VWL"/>
<dbReference type="PDBsum" id="6VWM"/>
<dbReference type="PDBsum" id="6VWN"/>
<dbReference type="PDBsum" id="6VYQ"/>
<dbReference type="PDBsum" id="6VYR"/>
<dbReference type="PDBsum" id="6VYS"/>
<dbReference type="PDBsum" id="6VYT"/>
<dbReference type="PDBsum" id="6VYU"/>
<dbReference type="PDBsum" id="6VYW"/>
<dbReference type="PDBsum" id="6VYX"/>
<dbReference type="PDBsum" id="6VYY"/>
<dbReference type="PDBsum" id="6VYZ"/>
<dbReference type="PDBsum" id="6VZ2"/>
<dbReference type="PDBsum" id="6VZ3"/>
<dbReference type="PDBsum" id="6VZ5"/>
<dbReference type="PDBsum" id="6VZ7"/>
<dbReference type="PDBsum" id="6VZJ"/>
<dbReference type="PDBsum" id="6W6K"/>
<dbReference type="PDBsum" id="6W77"/>
<dbReference type="PDBsum" id="6W7M"/>
<dbReference type="PDBsum" id="6W7N"/>
<dbReference type="PDBsum" id="6WD0"/>
<dbReference type="PDBsum" id="6WD1"/>
<dbReference type="PDBsum" id="6WD2"/>
<dbReference type="PDBsum" id="6WD3"/>
<dbReference type="PDBsum" id="6WD4"/>
<dbReference type="PDBsum" id="6WD5"/>
<dbReference type="PDBsum" id="6WD6"/>
<dbReference type="PDBsum" id="6WD7"/>
<dbReference type="PDBsum" id="6WD8"/>
<dbReference type="PDBsum" id="6WD9"/>
<dbReference type="PDBsum" id="6WDA"/>
<dbReference type="PDBsum" id="6WDB"/>
<dbReference type="PDBsum" id="6WDC"/>
<dbReference type="PDBsum" id="6WDD"/>
<dbReference type="PDBsum" id="6WDE"/>
<dbReference type="PDBsum" id="6WDF"/>
<dbReference type="PDBsum" id="6WDG"/>
<dbReference type="PDBsum" id="6WDH"/>
<dbReference type="PDBsum" id="6WDI"/>
<dbReference type="PDBsum" id="6WDJ"/>
<dbReference type="PDBsum" id="6WDK"/>
<dbReference type="PDBsum" id="6WDL"/>
<dbReference type="PDBsum" id="6WDM"/>
<dbReference type="PDBsum" id="6WNV"/>
<dbReference type="PDBsum" id="6WNW"/>
<dbReference type="PDBsum" id="6X6T"/>
<dbReference type="PDBsum" id="6X7F"/>
<dbReference type="PDBsum" id="6X7K"/>
<dbReference type="PDBsum" id="6X9Q"/>
<dbReference type="PDBsum" id="6XDQ"/>
<dbReference type="PDBsum" id="6XDR"/>
<dbReference type="PDBsum" id="6XE0"/>
<dbReference type="PDBsum" id="6XGF"/>
<dbReference type="PDBsum" id="6XII"/>
<dbReference type="PDBsum" id="6XIJ"/>
<dbReference type="PDBsum" id="6XZA"/>
<dbReference type="PDBsum" id="6XZB"/>
<dbReference type="PDBsum" id="6Y69"/>
<dbReference type="PDBsum" id="6ZTJ"/>
<dbReference type="PDBsum" id="6ZTL"/>
<dbReference type="PDBsum" id="6ZTM"/>
<dbReference type="PDBsum" id="6ZTN"/>
<dbReference type="PDBsum" id="6ZTO"/>
<dbReference type="PDBsum" id="6ZTP"/>
<dbReference type="PDBsum" id="6ZU1"/>
<dbReference type="PDBsum" id="7ABZ"/>
<dbReference type="PDBsum" id="7AC7"/>
<dbReference type="PDBsum" id="7ACJ"/>
<dbReference type="PDBsum" id="7ACR"/>
<dbReference type="PDBsum" id="7AF3"/>
<dbReference type="PDBsum" id="7AF5"/>
<dbReference type="PDBsum" id="7AF8"/>
<dbReference type="PDBsum" id="7AFA"/>
<dbReference type="PDBsum" id="7AFD"/>
<dbReference type="PDBsum" id="7AFH"/>
<dbReference type="PDBsum" id="7AFK"/>
<dbReference type="PDBsum" id="7AFN"/>
<dbReference type="PDBsum" id="7B5K"/>
<dbReference type="PDBsum" id="7BOE"/>
<dbReference type="PDBsum" id="7BOH"/>
<dbReference type="PDBsum" id="7D6Z"/>
<dbReference type="PDBsum" id="7D80"/>
<dbReference type="PDBsum" id="7JSS"/>
<dbReference type="PDBsum" id="7JSW"/>
<dbReference type="PDBsum" id="7JSZ"/>
<dbReference type="PDBsum" id="7JT1"/>
<dbReference type="PDBsum" id="7JT2"/>
<dbReference type="PDBsum" id="7JT3"/>
<dbReference type="PDBsum" id="7K00"/>
<dbReference type="PDBsum" id="7K50"/>
<dbReference type="PDBsum" id="7K51"/>
<dbReference type="PDBsum" id="7K52"/>
<dbReference type="PDBsum" id="7K53"/>
<dbReference type="PDBsum" id="7K54"/>
<dbReference type="PDBsum" id="7K55"/>
<dbReference type="PDBsum" id="7LV0"/>
<dbReference type="PDBsum" id="7M5D"/>
<dbReference type="PDBsum" id="7N1P"/>
<dbReference type="PDBsum" id="7N2C"/>
<dbReference type="PDBsum" id="7N2U"/>
<dbReference type="PDBsum" id="7N2V"/>
<dbReference type="PDBsum" id="7N30"/>
<dbReference type="PDBsum" id="7N31"/>
<dbReference type="PDBsum" id="7NAR"/>
<dbReference type="PDBsum" id="7NAT"/>
<dbReference type="PDBsum" id="7NAU"/>
<dbReference type="PDBsum" id="7NAV"/>
<dbReference type="PDBsum" id="7NAX"/>
<dbReference type="PDBsum" id="7NBU"/>
<dbReference type="PDBsum" id="7O19"/>
<dbReference type="PDBsum" id="7O1A"/>
<dbReference type="PDBsum" id="7O1C"/>
<dbReference type="PDBsum" id="7OE0"/>
<dbReference type="PDBsum" id="7OE1"/>
<dbReference type="PDBsum" id="7OIZ"/>
<dbReference type="PDBsum" id="7OJ0"/>
<dbReference type="PDBsum" id="7P3K"/>
<dbReference type="PDBsum" id="7PJU"/>
<dbReference type="PDBsum" id="7PJV"/>
<dbReference type="PDBsum" id="7PJY"/>
<dbReference type="PDBsum" id="7QG8"/>
<dbReference type="PDBsum" id="7QGN"/>
<dbReference type="PDBsum" id="7QGR"/>
<dbReference type="PDBsum" id="7S1G"/>
<dbReference type="PDBsum" id="7S1H"/>
<dbReference type="PDBsum" id="7S1I"/>
<dbReference type="PDBsum" id="7S1J"/>
<dbReference type="PDBsum" id="7S1K"/>
<dbReference type="PDBsum" id="7SA4"/>
<dbReference type="PDBsum" id="7SS9"/>
<dbReference type="PDBsum" id="7SSD"/>
<dbReference type="PDBsum" id="7SSL"/>
<dbReference type="PDBsum" id="7SSN"/>
<dbReference type="PDBsum" id="7SSO"/>
<dbReference type="PDBsum" id="7SSW"/>
<dbReference type="PDBsum" id="7ST2"/>
<dbReference type="PDBsum" id="7ST6"/>
<dbReference type="PDBsum" id="7ST7"/>
<dbReference type="PDBsum" id="7TOS"/>
<dbReference type="PDBsum" id="7UG7"/>
<dbReference type="PDBsum" id="7UPH"/>
<dbReference type="PDBsum" id="7Y7C"/>
<dbReference type="PDBsum" id="7Y7D"/>
<dbReference type="PDBsum" id="7Y7E"/>
<dbReference type="PDBsum" id="7Y7F"/>
<dbReference type="PDBsum" id="7Y7G"/>
<dbReference type="PDBsum" id="7Y7H"/>
<dbReference type="PDBsum" id="7ZTA"/>
<dbReference type="PDBsum" id="8A3L"/>
<dbReference type="PDBsum" id="8AKN"/>
<dbReference type="PDBsum" id="8AM9"/>
<dbReference type="PDBsum" id="8AYE"/>
<dbReference type="PDBsum" id="8B0X"/>
<dbReference type="PDBsum" id="8B7Y"/>
<dbReference type="PDBsum" id="8BF7"/>
<dbReference type="PDBsum" id="8BGE"/>
<dbReference type="PDBsum" id="8BGH"/>
<dbReference type="PDBsum" id="8BH4"/>
<dbReference type="PDBsum" id="8BHJ"/>
<dbReference type="PDBsum" id="8BHL"/>
<dbReference type="PDBsum" id="8BHN"/>
<dbReference type="PDBsum" id="8BHP"/>
<dbReference type="PDBsum" id="8BIL"/>
<dbReference type="PDBsum" id="8BIM"/>
<dbReference type="PDBsum" id="8CA7"/>
<dbReference type="PDBsum" id="8CAZ"/>
<dbReference type="PDBsum" id="8CF1"/>
<dbReference type="PDBsum" id="8CF8"/>
<dbReference type="PDBsum" id="8CGI"/>
<dbReference type="PDBsum" id="8EIU"/>
<dbReference type="PDBsum" id="8EKC"/>
<dbReference type="PDBsum" id="8EMM"/>
<dbReference type="PDBsum" id="8EYQ"/>
<dbReference type="PDBsum" id="8EYT"/>
<dbReference type="PDBsum" id="8FIZ"/>
<dbReference type="PDBsum" id="8FTO"/>
<dbReference type="PDBsum" id="8FZD"/>
<dbReference type="PDBsum" id="8FZE"/>
<dbReference type="PDBsum" id="8FZF"/>
<dbReference type="PDBsum" id="8FZG"/>
<dbReference type="PDBsum" id="8FZH"/>
<dbReference type="PDBsum" id="8FZI"/>
<dbReference type="PDBsum" id="8FZJ"/>
<dbReference type="PDBsum" id="8G2U"/>
<dbReference type="PDBsum" id="8G31"/>
<dbReference type="PDBsum" id="8G34"/>
<dbReference type="PDBsum" id="8G38"/>
<dbReference type="PDBsum" id="8G6W"/>
<dbReference type="PDBsum" id="8G7P"/>
<dbReference type="PDBsum" id="8G7Q"/>
<dbReference type="PDBsum" id="8G7R"/>
<dbReference type="PDBsum" id="8G7S"/>
<dbReference type="PDBsum" id="8HSP"/>
<dbReference type="PDBsum" id="8HTZ"/>
<dbReference type="PDBsum" id="8HU1"/>
<dbReference type="PDBsum" id="8IFB"/>
<dbReference type="PDBsum" id="8IFC"/>
<dbReference type="PDBsum" id="8JSG"/>
<dbReference type="PDBsum" id="8K3O"/>
<dbReference type="PDBsum" id="8K4E"/>
<dbReference type="PDBsum" id="8P16"/>
<dbReference type="PDBsum" id="8P17"/>
<dbReference type="PDBsum" id="8P18"/>
<dbReference type="PDBsum" id="8PEG"/>
<dbReference type="PDBsum" id="8PHJ"/>
<dbReference type="PDBsum" id="8PKL"/>
<dbReference type="PDBsum" id="8PVA"/>
<dbReference type="PDBsum" id="8Q4F"/>
<dbReference type="PDBsum" id="8QK7"/>
<dbReference type="PDBsum" id="8QOA"/>
<dbReference type="PDBsum" id="8R3V"/>
<dbReference type="PDBsum" id="8R6C"/>
<dbReference type="PDBsum" id="8R8M"/>
<dbReference type="PDBsum" id="8RCL"/>
<dbReference type="PDBsum" id="8RCM"/>
<dbReference type="PDBsum" id="8RCS"/>
<dbReference type="PDBsum" id="8RCT"/>
<dbReference type="PDBsum" id="8SYL"/>
<dbReference type="PDBsum" id="8T5D"/>
<dbReference type="PDBsum" id="8T5H"/>
<dbReference type="PDBsum" id="8UPO"/>
<dbReference type="PDBsum" id="8UPR"/>
<dbReference type="PDBsum" id="8UQL"/>
<dbReference type="PDBsum" id="8UQM"/>
<dbReference type="PDBsum" id="8UQP"/>
<dbReference type="PDBsum" id="8UR0"/>
<dbReference type="PDBsum" id="8URH"/>
<dbReference type="PDBsum" id="8URI"/>
<dbReference type="PDBsum" id="8URX"/>
<dbReference type="PDBsum" id="8URY"/>
<dbReference type="PDBsum" id="8VS9"/>
<dbReference type="PDBsum" id="8VSA"/>
<dbReference type="PDBsum" id="8YUO"/>
<dbReference type="PDBsum" id="8YUP"/>
<dbReference type="PDBsum" id="8YUQ"/>
<dbReference type="PDBsum" id="8YUR"/>
<dbReference type="PDBsum" id="8YUS"/>
<dbReference type="PDBsum" id="9DUK"/>
<dbReference type="PDBsum" id="9DUL"/>
<dbReference type="PDBsum" id="9FBV"/>
<dbReference type="PDBsum" id="9GFT"/>
<dbReference type="PDBsum" id="9GGR"/>
<dbReference type="PDBsum" id="9GUP"/>
<dbReference type="PDBsum" id="9GUQ"/>
<dbReference type="PDBsum" id="9GUS"/>
<dbReference type="PDBsum" id="9GUT"/>
<dbReference type="PDBsum" id="9GUU"/>
<dbReference type="PDBsum" id="9GUV"/>
<dbReference type="PDBsum" id="9GUW"/>
<dbReference type="PDBsum" id="9GUX"/>
<dbReference type="PDBsum" id="9MOR"/>
<dbReference type="PDBsum" id="9MQ4"/>
<dbReference type="EMDB" id="EMD-0076"/>
<dbReference type="EMDB" id="EMD-0080"/>
<dbReference type="EMDB" id="EMD-0081"/>
<dbReference type="EMDB" id="EMD-0082"/>
<dbReference type="EMDB" id="EMD-0083"/>
<dbReference type="EMDB" id="EMD-0137"/>
<dbReference type="EMDB" id="EMD-0139"/>
<dbReference type="EMDB" id="EMD-0261"/>
<dbReference type="EMDB" id="EMD-10353"/>
<dbReference type="EMDB" id="EMD-10453"/>
<dbReference type="EMDB" id="EMD-10458"/>
<dbReference type="EMDB" id="EMD-10656"/>
<dbReference type="EMDB" id="EMD-10657"/>
<dbReference type="EMDB" id="EMD-10705"/>
<dbReference type="EMDB" id="EMD-11419"/>
<dbReference type="EMDB" id="EMD-11710"/>
<dbReference type="EMDB" id="EMD-11713"/>
<dbReference type="EMDB" id="EMD-11717"/>
<dbReference type="EMDB" id="EMD-11718"/>
<dbReference type="EMDB" id="EMD-12035"/>
<dbReference type="EMDB" id="EMD-12240"/>
<dbReference type="EMDB" id="EMD-12243"/>
<dbReference type="EMDB" id="EMD-12245"/>
<dbReference type="EMDB" id="EMD-12247"/>
<dbReference type="EMDB" id="EMD-12248"/>
<dbReference type="EMDB" id="EMD-12249"/>
<dbReference type="EMDB" id="EMD-12261"/>
<dbReference type="EMDB" id="EMD-12693"/>
<dbReference type="EMDB" id="EMD-12694"/>
<dbReference type="EMDB" id="EMD-12695"/>
<dbReference type="EMDB" id="EMD-13180"/>
<dbReference type="EMDB" id="EMD-13461"/>
<dbReference type="EMDB" id="EMD-13464"/>
<dbReference type="EMDB" id="EMD-13952"/>
<dbReference type="EMDB" id="EMD-13958"/>
<dbReference type="EMDB" id="EMD-14956"/>
<dbReference type="EMDB" id="EMD-15116"/>
<dbReference type="EMDB" id="EMD-15712"/>
<dbReference type="EMDB" id="EMD-15793"/>
<dbReference type="EMDB" id="EMD-15905"/>
<dbReference type="EMDB" id="EMD-16015"/>
<dbReference type="EMDB" id="EMD-16029"/>
<dbReference type="EMDB" id="EMD-16031"/>
<dbReference type="EMDB" id="EMD-16047"/>
<dbReference type="EMDB" id="EMD-16057"/>
<dbReference type="EMDB" id="EMD-16059"/>
<dbReference type="EMDB" id="EMD-16062"/>
<dbReference type="EMDB" id="EMD-16065"/>
<dbReference type="EMDB" id="EMD-16081"/>
<dbReference type="EMDB" id="EMD-16082"/>
<dbReference type="EMDB" id="EMD-16520"/>
<dbReference type="EMDB" id="EMD-16536"/>
<dbReference type="EMDB" id="EMD-16615"/>
<dbReference type="EMDB" id="EMD-16620"/>
<dbReference type="EMDB" id="EMD-16644"/>
<dbReference type="EMDB" id="EMD-17346"/>
<dbReference type="EMDB" id="EMD-17347"/>
<dbReference type="EMDB" id="EMD-17348"/>
<dbReference type="EMDB" id="EMD-17631"/>
<dbReference type="EMDB" id="EMD-17667"/>
<dbReference type="EMDB" id="EMD-17743"/>
<dbReference type="EMDB" id="EMD-17959"/>
<dbReference type="EMDB" id="EMD-18145"/>
<dbReference type="EMDB" id="EMD-18458"/>
<dbReference type="EMDB" id="EMD-18534"/>
<dbReference type="EMDB" id="EMD-18875"/>
<dbReference type="EMDB" id="EMD-18950"/>
<dbReference type="EMDB" id="EMD-19004"/>
<dbReference type="EMDB" id="EMD-19054"/>
<dbReference type="EMDB" id="EMD-19055"/>
<dbReference type="EMDB" id="EMD-19058"/>
<dbReference type="EMDB" id="EMD-19059"/>
<dbReference type="EMDB" id="EMD-20048"/>
<dbReference type="EMDB" id="EMD-20052"/>
<dbReference type="EMDB" id="EMD-21420"/>
<dbReference type="EMDB" id="EMD-21421"/>
<dbReference type="EMDB" id="EMD-21422"/>
<dbReference type="EMDB" id="EMD-21558"/>
<dbReference type="EMDB" id="EMD-21569"/>
<dbReference type="EMDB" id="EMD-21571"/>
<dbReference type="EMDB" id="EMD-21572"/>
<dbReference type="EMDB" id="EMD-21625"/>
<dbReference type="EMDB" id="EMD-21630"/>
<dbReference type="EMDB" id="EMD-21631"/>
<dbReference type="EMDB" id="EMD-21632"/>
<dbReference type="EMDB" id="EMD-21633"/>
<dbReference type="EMDB" id="EMD-21634"/>
<dbReference type="EMDB" id="EMD-21635"/>
<dbReference type="EMDB" id="EMD-21636"/>
<dbReference type="EMDB" id="EMD-21637"/>
<dbReference type="EMDB" id="EMD-21638"/>
<dbReference type="EMDB" id="EMD-21639"/>
<dbReference type="EMDB" id="EMD-21640"/>
<dbReference type="EMDB" id="EMD-21641"/>
<dbReference type="EMDB" id="EMD-21857"/>
<dbReference type="EMDB" id="EMD-21858"/>
<dbReference type="EMDB" id="EMD-22143"/>
<dbReference type="EMDB" id="EMD-22459"/>
<dbReference type="EMDB" id="EMD-22461"/>
<dbReference type="EMDB" id="EMD-22464"/>
<dbReference type="EMDB" id="EMD-22466"/>
<dbReference type="EMDB" id="EMD-22469"/>
<dbReference type="EMDB" id="EMD-22472"/>
<dbReference type="EMDB" id="EMD-22669"/>
<dbReference type="EMDB" id="EMD-22670"/>
<dbReference type="EMDB" id="EMD-22671"/>
<dbReference type="EMDB" id="EMD-22672"/>
<dbReference type="EMDB" id="EMD-22673"/>
<dbReference type="EMDB" id="EMD-22674"/>
<dbReference type="EMDB" id="EMD-23528"/>
<dbReference type="EMDB" id="EMD-24120"/>
<dbReference type="EMDB" id="EMD-24132"/>
<dbReference type="EMDB" id="EMD-24133"/>
<dbReference type="EMDB" id="EMD-24134"/>
<dbReference type="EMDB" id="EMD-24135"/>
<dbReference type="EMDB" id="EMD-24136"/>
<dbReference type="EMDB" id="EMD-24803"/>
<dbReference type="EMDB" id="EMD-25405"/>
<dbReference type="EMDB" id="EMD-25407"/>
<dbReference type="EMDB" id="EMD-25409"/>
<dbReference type="EMDB" id="EMD-25410"/>
<dbReference type="EMDB" id="EMD-25411"/>
<dbReference type="EMDB" id="EMD-25415"/>
<dbReference type="EMDB" id="EMD-25418"/>
<dbReference type="EMDB" id="EMD-25420"/>
<dbReference type="EMDB" id="EMD-25421"/>
<dbReference type="EMDB" id="EMD-30598"/>
<dbReference type="EMDB" id="EMD-30611"/>
<dbReference type="EMDB" id="EMD-33660"/>
<dbReference type="EMDB" id="EMD-33661"/>
<dbReference type="EMDB" id="EMD-33662"/>
<dbReference type="EMDB" id="EMD-33663"/>
<dbReference type="EMDB" id="EMD-33664"/>
<dbReference type="EMDB" id="EMD-33665"/>
<dbReference type="EMDB" id="EMD-3489"/>
<dbReference type="EMDB" id="EMD-3490"/>
<dbReference type="EMDB" id="EMD-3492"/>
<dbReference type="EMDB" id="EMD-3493"/>
<dbReference type="EMDB" id="EMD-3494"/>
<dbReference type="EMDB" id="EMD-3495"/>
<dbReference type="EMDB" id="EMD-35001"/>
<dbReference type="EMDB" id="EMD-35020"/>
<dbReference type="EMDB" id="EMD-35022"/>
<dbReference type="EMDB" id="EMD-3508"/>
<dbReference type="EMDB" id="EMD-35411"/>
<dbReference type="EMDB" id="EMD-35412"/>
<dbReference type="EMDB" id="EMD-3561"/>
<dbReference type="EMDB" id="EMD-3580"/>
<dbReference type="EMDB" id="EMD-3661"/>
<dbReference type="EMDB" id="EMD-36619"/>
<dbReference type="EMDB" id="EMD-3662"/>
<dbReference type="EMDB" id="EMD-3663"/>
<dbReference type="EMDB" id="EMD-36854"/>
<dbReference type="EMDB" id="EMD-36883"/>
<dbReference type="EMDB" id="EMD-3713"/>
<dbReference type="EMDB" id="EMD-3730"/>
<dbReference type="EMDB" id="EMD-3898"/>
<dbReference type="EMDB" id="EMD-3899"/>
<dbReference type="EMDB" id="EMD-3903"/>
<dbReference type="EMDB" id="EMD-39577"/>
<dbReference type="EMDB" id="EMD-39578"/>
<dbReference type="EMDB" id="EMD-39579"/>
<dbReference type="EMDB" id="EMD-39580"/>
<dbReference type="EMDB" id="EMD-39581"/>
<dbReference type="EMDB" id="EMD-4001"/>
<dbReference type="EMDB" id="EMD-4121"/>
<dbReference type="EMDB" id="EMD-4122"/>
<dbReference type="EMDB" id="EMD-4123"/>
<dbReference type="EMDB" id="EMD-4124"/>
<dbReference type="EMDB" id="EMD-4125"/>
<dbReference type="EMDB" id="EMD-4126"/>
<dbReference type="EMDB" id="EMD-42504"/>
<dbReference type="EMDB" id="EMD-4476"/>
<dbReference type="EMDB" id="EMD-4477"/>
<dbReference type="EMDB" id="EMD-4478"/>
<dbReference type="EMDB" id="EMD-50296"/>
<dbReference type="EMDB" id="EMD-51318"/>
<dbReference type="EMDB" id="EMD-51340"/>
<dbReference type="EMDB" id="EMD-51615"/>
<dbReference type="EMDB" id="EMD-51616"/>
<dbReference type="EMDB" id="EMD-51618"/>
<dbReference type="EMDB" id="EMD-51619"/>
<dbReference type="EMDB" id="EMD-51620"/>
<dbReference type="EMDB" id="EMD-51621"/>
<dbReference type="EMDB" id="EMD-51622"/>
<dbReference type="EMDB" id="EMD-51623"/>
<dbReference type="EMDB" id="EMD-6667"/>
<dbReference type="EMDB" id="EMD-7289"/>
<dbReference type="EMDB" id="EMD-7341"/>
<dbReference type="EMDB" id="EMD-8107"/>
<dbReference type="EMDB" id="EMD-8175"/>
<dbReference type="EMDB" id="EMD-8176"/>
<dbReference type="EMDB" id="EMD-8237"/>
<dbReference type="EMDB" id="EMD-8238"/>
<dbReference type="EMDB" id="EMD-8279"/>
<dbReference type="EMDB" id="EMD-8280"/>
<dbReference type="EMDB" id="EMD-8281"/>
<dbReference type="EMDB" id="EMD-8282"/>
<dbReference type="EMDB" id="EMD-8505"/>
<dbReference type="EMDB" id="EMD-8615"/>
<dbReference type="EMDB" id="EMD-8616"/>
<dbReference type="EMDB" id="EMD-8617"/>
<dbReference type="EMDB" id="EMD-8618"/>
<dbReference type="EMDB" id="EMD-8619"/>
<dbReference type="EMDB" id="EMD-8620"/>
<dbReference type="EMDB" id="EMD-8813"/>
<dbReference type="EMDB" id="EMD-8814"/>
<dbReference type="EMDB" id="EMD-8815"/>
<dbReference type="EMDB" id="EMD-8828"/>
<dbReference type="SMR" id="P0A7R5"/>
<dbReference type="BioGRID" id="4261293">
    <property type="interactions" value="9"/>
</dbReference>
<dbReference type="BioGRID" id="852128">
    <property type="interactions" value="2"/>
</dbReference>
<dbReference type="ComplexPortal" id="CPX-3802">
    <property type="entry name" value="30S small ribosomal subunit"/>
</dbReference>
<dbReference type="ComplexPortal" id="CPX-5674">
    <property type="entry name" value="Transcription elongation complex"/>
</dbReference>
<dbReference type="ComplexPortal" id="CPX-5780">
    <property type="entry name" value="lambdaN-dependent processive transcription antitermination complex"/>
</dbReference>
<dbReference type="DIP" id="DIP-35797N"/>
<dbReference type="FunCoup" id="P0A7R5">
    <property type="interactions" value="1188"/>
</dbReference>
<dbReference type="IntAct" id="P0A7R5">
    <property type="interactions" value="135"/>
</dbReference>
<dbReference type="STRING" id="511145.b3321"/>
<dbReference type="DrugBank" id="DB00698">
    <property type="generic name" value="Nitrofurantoin"/>
</dbReference>
<dbReference type="MoonProt" id="P0A7R5"/>
<dbReference type="jPOST" id="P0A7R5"/>
<dbReference type="PaxDb" id="511145-b3321"/>
<dbReference type="EnsemblBacteria" id="AAC76346">
    <property type="protein sequence ID" value="AAC76346"/>
    <property type="gene ID" value="b3321"/>
</dbReference>
<dbReference type="GeneID" id="93778666"/>
<dbReference type="GeneID" id="947816"/>
<dbReference type="KEGG" id="ecj:JW3283"/>
<dbReference type="KEGG" id="eco:b3321"/>
<dbReference type="KEGG" id="ecoc:C3026_18045"/>
<dbReference type="PATRIC" id="fig|1411691.4.peg.3410"/>
<dbReference type="EchoBASE" id="EB0902"/>
<dbReference type="eggNOG" id="COG0051">
    <property type="taxonomic scope" value="Bacteria"/>
</dbReference>
<dbReference type="HOGENOM" id="CLU_122625_1_3_6"/>
<dbReference type="InParanoid" id="P0A7R5"/>
<dbReference type="OMA" id="VDIEIKM"/>
<dbReference type="OrthoDB" id="9804464at2"/>
<dbReference type="PhylomeDB" id="P0A7R5"/>
<dbReference type="BioCyc" id="EcoCyc:EG10909-MONOMER"/>
<dbReference type="BioCyc" id="MetaCyc:EG10909-MONOMER"/>
<dbReference type="EvolutionaryTrace" id="P0A7R5"/>
<dbReference type="PRO" id="PR:P0A7R5"/>
<dbReference type="Proteomes" id="UP000000625">
    <property type="component" value="Chromosome"/>
</dbReference>
<dbReference type="GO" id="GO:0005737">
    <property type="term" value="C:cytoplasm"/>
    <property type="evidence" value="ECO:0000314"/>
    <property type="project" value="ComplexPortal"/>
</dbReference>
<dbReference type="GO" id="GO:0005829">
    <property type="term" value="C:cytosol"/>
    <property type="evidence" value="ECO:0000314"/>
    <property type="project" value="EcoCyc"/>
</dbReference>
<dbReference type="GO" id="GO:0022627">
    <property type="term" value="C:cytosolic small ribosomal subunit"/>
    <property type="evidence" value="ECO:0000314"/>
    <property type="project" value="EcoliWiki"/>
</dbReference>
<dbReference type="GO" id="GO:0015935">
    <property type="term" value="C:small ribosomal subunit"/>
    <property type="evidence" value="ECO:0000318"/>
    <property type="project" value="GO_Central"/>
</dbReference>
<dbReference type="GO" id="GO:0008023">
    <property type="term" value="C:transcription elongation factor complex"/>
    <property type="evidence" value="ECO:0000303"/>
    <property type="project" value="ComplexPortal"/>
</dbReference>
<dbReference type="GO" id="GO:0003735">
    <property type="term" value="F:structural constituent of ribosome"/>
    <property type="evidence" value="ECO:0000318"/>
    <property type="project" value="GO_Central"/>
</dbReference>
<dbReference type="GO" id="GO:0001072">
    <property type="term" value="F:transcription antitermination factor activity, RNA binding"/>
    <property type="evidence" value="ECO:0000314"/>
    <property type="project" value="EcoCyc"/>
</dbReference>
<dbReference type="GO" id="GO:0000049">
    <property type="term" value="F:tRNA binding"/>
    <property type="evidence" value="ECO:0007669"/>
    <property type="project" value="UniProtKB-UniRule"/>
</dbReference>
<dbReference type="GO" id="GO:0002181">
    <property type="term" value="P:cytoplasmic translation"/>
    <property type="evidence" value="ECO:0000303"/>
    <property type="project" value="ComplexPortal"/>
</dbReference>
<dbReference type="GO" id="GO:0032784">
    <property type="term" value="P:regulation of DNA-templated transcription elongation"/>
    <property type="evidence" value="ECO:0000303"/>
    <property type="project" value="ComplexPortal"/>
</dbReference>
<dbReference type="GO" id="GO:0042254">
    <property type="term" value="P:ribosome biogenesis"/>
    <property type="evidence" value="ECO:0007669"/>
    <property type="project" value="UniProtKB-KW"/>
</dbReference>
<dbReference type="GO" id="GO:0031564">
    <property type="term" value="P:transcription antitermination"/>
    <property type="evidence" value="ECO:0000314"/>
    <property type="project" value="EcoCyc"/>
</dbReference>
<dbReference type="FunFam" id="3.30.70.600:FF:000001">
    <property type="entry name" value="30S ribosomal protein S10"/>
    <property type="match status" value="1"/>
</dbReference>
<dbReference type="Gene3D" id="3.30.70.600">
    <property type="entry name" value="Ribosomal protein S10 domain"/>
    <property type="match status" value="1"/>
</dbReference>
<dbReference type="HAMAP" id="MF_00508">
    <property type="entry name" value="Ribosomal_uS10"/>
    <property type="match status" value="1"/>
</dbReference>
<dbReference type="InterPro" id="IPR001848">
    <property type="entry name" value="Ribosomal_uS10"/>
</dbReference>
<dbReference type="InterPro" id="IPR018268">
    <property type="entry name" value="Ribosomal_uS10_CS"/>
</dbReference>
<dbReference type="InterPro" id="IPR027486">
    <property type="entry name" value="Ribosomal_uS10_dom"/>
</dbReference>
<dbReference type="InterPro" id="IPR036838">
    <property type="entry name" value="Ribosomal_uS10_dom_sf"/>
</dbReference>
<dbReference type="NCBIfam" id="NF001861">
    <property type="entry name" value="PRK00596.1"/>
    <property type="match status" value="1"/>
</dbReference>
<dbReference type="NCBIfam" id="TIGR01049">
    <property type="entry name" value="rpsJ_bact"/>
    <property type="match status" value="1"/>
</dbReference>
<dbReference type="PANTHER" id="PTHR11700">
    <property type="entry name" value="30S RIBOSOMAL PROTEIN S10 FAMILY MEMBER"/>
    <property type="match status" value="1"/>
</dbReference>
<dbReference type="Pfam" id="PF00338">
    <property type="entry name" value="Ribosomal_S10"/>
    <property type="match status" value="1"/>
</dbReference>
<dbReference type="PRINTS" id="PR00971">
    <property type="entry name" value="RIBOSOMALS10"/>
</dbReference>
<dbReference type="SMART" id="SM01403">
    <property type="entry name" value="Ribosomal_S10"/>
    <property type="match status" value="1"/>
</dbReference>
<dbReference type="SUPFAM" id="SSF54999">
    <property type="entry name" value="Ribosomal protein S10"/>
    <property type="match status" value="1"/>
</dbReference>
<dbReference type="PROSITE" id="PS00361">
    <property type="entry name" value="RIBOSOMAL_S10"/>
    <property type="match status" value="1"/>
</dbReference>
<accession>P0A7R5</accession>
<accession>P02364</accession>
<accession>Q2M6Y6</accession>
<sequence>MQNQRIRIRLKAFDHRLIDQATAEIVETAKRTGAQVRGPIPLPTRKERFTVLISPHVNKDARDQYEIRTHLRLVDIVEPTEKTVDALMRLDLAAGVDVQISLG</sequence>
<feature type="chain" id="PRO_0000146529" description="Small ribosomal subunit protein uS10">
    <location>
        <begin position="1"/>
        <end position="103"/>
    </location>
</feature>
<feature type="strand" evidence="33">
    <location>
        <begin position="5"/>
        <end position="13"/>
    </location>
</feature>
<feature type="helix" evidence="33">
    <location>
        <begin position="15"/>
        <end position="30"/>
    </location>
</feature>
<feature type="turn" evidence="33">
    <location>
        <begin position="31"/>
        <end position="33"/>
    </location>
</feature>
<feature type="strand" evidence="33">
    <location>
        <begin position="35"/>
        <end position="45"/>
    </location>
</feature>
<feature type="strand" evidence="35">
    <location>
        <begin position="54"/>
        <end position="57"/>
    </location>
</feature>
<feature type="helix" evidence="36">
    <location>
        <begin position="59"/>
        <end position="61"/>
    </location>
</feature>
<feature type="strand" evidence="33">
    <location>
        <begin position="69"/>
        <end position="78"/>
    </location>
</feature>
<feature type="helix" evidence="33">
    <location>
        <begin position="81"/>
        <end position="89"/>
    </location>
</feature>
<feature type="strand" evidence="34">
    <location>
        <begin position="93"/>
        <end position="95"/>
    </location>
</feature>
<feature type="strand" evidence="33">
    <location>
        <begin position="96"/>
        <end position="103"/>
    </location>
</feature>
<reference key="1">
    <citation type="journal article" date="1980" name="FEBS Lett.">
        <title>The primary structure of protein S10 from the small ribosomal subunit of Escherichia coli.</title>
        <authorList>
            <person name="Yaguchi M."/>
            <person name="Roy C."/>
            <person name="Wittmann H.G."/>
        </authorList>
    </citation>
    <scope>PROTEIN SEQUENCE</scope>
    <scope>SUBUNIT</scope>
</reference>
<reference key="2">
    <citation type="journal article" date="1981" name="Cell">
        <title>Regulation of the S10 ribosomal protein operon in E. coli: nucleotide sequence at the start of the operon.</title>
        <authorList>
            <person name="Olins P.O."/>
            <person name="Nomura M."/>
        </authorList>
    </citation>
    <scope>NUCLEOTIDE SEQUENCE [GENOMIC DNA]</scope>
</reference>
<reference key="3">
    <citation type="journal article" date="1985" name="Nucleic Acids Res.">
        <title>Structure of the Escherichia coli S10 ribosomal protein operon.</title>
        <authorList>
            <person name="Zurawski G."/>
            <person name="Zurawski S.M."/>
        </authorList>
    </citation>
    <scope>NUCLEOTIDE SEQUENCE [GENOMIC DNA]</scope>
</reference>
<reference key="4">
    <citation type="journal article" date="1997" name="Science">
        <title>The complete genome sequence of Escherichia coli K-12.</title>
        <authorList>
            <person name="Blattner F.R."/>
            <person name="Plunkett G. III"/>
            <person name="Bloch C.A."/>
            <person name="Perna N.T."/>
            <person name="Burland V."/>
            <person name="Riley M."/>
            <person name="Collado-Vides J."/>
            <person name="Glasner J.D."/>
            <person name="Rode C.K."/>
            <person name="Mayhew G.F."/>
            <person name="Gregor J."/>
            <person name="Davis N.W."/>
            <person name="Kirkpatrick H.A."/>
            <person name="Goeden M.A."/>
            <person name="Rose D.J."/>
            <person name="Mau B."/>
            <person name="Shao Y."/>
        </authorList>
    </citation>
    <scope>NUCLEOTIDE SEQUENCE [LARGE SCALE GENOMIC DNA]</scope>
    <source>
        <strain>K12 / MG1655 / ATCC 47076</strain>
    </source>
</reference>
<reference key="5">
    <citation type="journal article" date="2006" name="Mol. Syst. Biol.">
        <title>Highly accurate genome sequences of Escherichia coli K-12 strains MG1655 and W3110.</title>
        <authorList>
            <person name="Hayashi K."/>
            <person name="Morooka N."/>
            <person name="Yamamoto Y."/>
            <person name="Fujita K."/>
            <person name="Isono K."/>
            <person name="Choi S."/>
            <person name="Ohtsubo E."/>
            <person name="Baba T."/>
            <person name="Wanner B.L."/>
            <person name="Mori H."/>
            <person name="Horiuchi T."/>
        </authorList>
    </citation>
    <scope>NUCLEOTIDE SEQUENCE [LARGE SCALE GENOMIC DNA]</scope>
    <source>
        <strain>K12 / W3110 / ATCC 27325 / DSM 5911</strain>
    </source>
</reference>
<reference key="6">
    <citation type="journal article" date="1997" name="Electrophoresis">
        <title>Comparing the predicted and observed properties of proteins encoded in the genome of Escherichia coli K-12.</title>
        <authorList>
            <person name="Link A.J."/>
            <person name="Robison K."/>
            <person name="Church G.M."/>
        </authorList>
    </citation>
    <scope>PROTEIN SEQUENCE OF 1-12</scope>
    <source>
        <strain>K12 / EMG2</strain>
    </source>
</reference>
<reference key="7">
    <citation type="submission" date="1998-04" db="EMBL/GenBank/DDBJ databases">
        <authorList>
            <person name="Noorani S.M."/>
            <person name="Lindahl L."/>
            <person name="Zengel J.M."/>
        </authorList>
    </citation>
    <scope>NUCLEOTIDE SEQUENCE [GENOMIC DNA] OF 1-9</scope>
    <source>
        <strain>ECOR 30</strain>
    </source>
</reference>
<reference key="8">
    <citation type="journal article" date="1982" name="Eur. J. Biochem.">
        <title>Crosslinking of N-acetyl-phenylalanyl [s4U]tRNAPhe to protein S10 in the ribosomal P site.</title>
        <authorList>
            <person name="Riehl N."/>
            <person name="Remy P."/>
            <person name="Ebel J.P."/>
            <person name="Ehresmann B."/>
        </authorList>
    </citation>
    <scope>FUNCTION</scope>
</reference>
<reference key="9">
    <citation type="journal article" date="1992" name="J. Mol. Biol.">
        <title>Direct interaction between two Escherichia coli transcription antitermination factors, NusB and ribosomal protein S10.</title>
        <authorList>
            <person name="Mason S.W."/>
            <person name="Li J."/>
            <person name="Greenblatt J."/>
        </authorList>
    </citation>
    <scope>INTERACTION WITH NUSB</scope>
</reference>
<reference key="10">
    <citation type="journal article" date="1993" name="Cell">
        <title>Recognition of boxA antiterminator RNA by the E. coli antitermination factors NusB and ribosomal protein S10.</title>
        <authorList>
            <person name="Nodwell J.R."/>
            <person name="Greenblatt J."/>
        </authorList>
    </citation>
    <scope>FUNCTION IN ANTITERMINATION</scope>
</reference>
<reference key="11">
    <citation type="journal article" date="1997" name="Electrophoresis">
        <title>Escherichia coli proteome analysis using the gene-protein database.</title>
        <authorList>
            <person name="VanBogelen R.A."/>
            <person name="Abshire K.Z."/>
            <person name="Moldover B."/>
            <person name="Olson E.R."/>
            <person name="Neidhardt F.C."/>
        </authorList>
    </citation>
    <scope>IDENTIFICATION BY 2D-GEL</scope>
</reference>
<reference key="12">
    <citation type="journal article" date="1999" name="Anal. Biochem.">
        <title>Observation of Escherichia coli ribosomal proteins and their posttranslational modifications by mass spectrometry.</title>
        <authorList>
            <person name="Arnold R.J."/>
            <person name="Reilly J.P."/>
        </authorList>
    </citation>
    <scope>MASS SPECTROMETRY</scope>
    <scope>SUBUNIT</scope>
    <source>
        <strain>K12 / ATCC 25404 / DSM 5698 / NCIMB 11290</strain>
    </source>
</reference>
<reference key="13">
    <citation type="journal article" date="2002" name="J. Mol. Biol.">
        <title>Transcriptional regulation by antitermination. Interaction of RNA with NusB protein and NusB/NusE protein complex of Escherichia coli.</title>
        <authorList>
            <person name="Luettgen H."/>
            <person name="Robelek R."/>
            <person name="Muehlberger R."/>
            <person name="Diercks T."/>
            <person name="Schuster S.C."/>
            <person name="Koehler P."/>
            <person name="Kessler H."/>
            <person name="Bacher A."/>
            <person name="Richter G."/>
        </authorList>
    </citation>
    <scope>FUNCTION IN ANTITERMINATION</scope>
    <scope>INTERACTION WITH NUSB</scope>
</reference>
<reference key="14">
    <citation type="journal article" date="2005" name="J. Biol. Chem.">
        <title>Assembly of an RNA-protein complex. Binding of NusB and NusE (S10) proteins to boxA RNA nucleates the formation of the antitermination complex involved in controlling rRNA transcription in Escherichia coli.</title>
        <authorList>
            <person name="Greive S.J."/>
            <person name="Lins A.F."/>
            <person name="von Hippel P.H."/>
        </authorList>
    </citation>
    <scope>FUNCTION</scope>
    <scope>INTERACTION WITH NUSB</scope>
    <scope>RNA-BINDING</scope>
</reference>
<reference key="15">
    <citation type="journal article" date="2014" name="Curr. Opin. Struct. Biol.">
        <title>A new system for naming ribosomal proteins.</title>
        <authorList>
            <person name="Ban N."/>
            <person name="Beckmann R."/>
            <person name="Cate J.H.D."/>
            <person name="Dinman J.D."/>
            <person name="Dragon F."/>
            <person name="Ellis S.R."/>
            <person name="Lafontaine D.L.J."/>
            <person name="Lindahl L."/>
            <person name="Liljas A."/>
            <person name="Lipton J.M."/>
            <person name="McAlear M.A."/>
            <person name="Moore P.B."/>
            <person name="Noller H.F."/>
            <person name="Ortega J."/>
            <person name="Panse V.G."/>
            <person name="Ramakrishnan V."/>
            <person name="Spahn C.M.T."/>
            <person name="Steitz T.A."/>
            <person name="Tchorzewski M."/>
            <person name="Tollervey D."/>
            <person name="Warren A.J."/>
            <person name="Williamson J.R."/>
            <person name="Wilson D."/>
            <person name="Yonath A."/>
            <person name="Yusupov M."/>
        </authorList>
    </citation>
    <scope>NOMENCLATURE</scope>
</reference>
<reference key="16">
    <citation type="journal article" date="2002" name="Nat. Struct. Biol.">
        <title>All-atom homology model of the Escherichia coli 30S ribosomal subunit.</title>
        <authorList>
            <person name="Tung C.-S."/>
            <person name="Joseph S."/>
            <person name="Sanbonmatsu K.Y."/>
        </authorList>
    </citation>
    <scope>3D-STRUCTURE MODELING</scope>
    <scope>SUBUNIT</scope>
</reference>
<reference evidence="22" key="17">
    <citation type="journal article" date="2003" name="Cell">
        <title>Study of the structural dynamics of the E. coli 70S ribosome using real-space refinement.</title>
        <authorList>
            <person name="Gao H."/>
            <person name="Sengupta J."/>
            <person name="Valle M."/>
            <person name="Korostelev A."/>
            <person name="Eswar N."/>
            <person name="Stagg S.M."/>
            <person name="Van Roey P."/>
            <person name="Agrawal R.K."/>
            <person name="Harvey S.C."/>
            <person name="Sali A."/>
            <person name="Chapman M.S."/>
            <person name="Frank J."/>
        </authorList>
    </citation>
    <scope>STRUCTURE BY ELECTRON MICROSCOPY (11.50 ANGSTROMS)</scope>
    <scope>SUBUNIT</scope>
    <source>
        <strain>MRE-600</strain>
    </source>
</reference>
<reference evidence="23" key="18">
    <citation type="journal article" date="2005" name="Science">
        <title>Structures of the bacterial ribosome at 3.5 A resolution.</title>
        <authorList>
            <person name="Schuwirth B.S."/>
            <person name="Borovinskaya M.A."/>
            <person name="Hau C.W."/>
            <person name="Zhang W."/>
            <person name="Vila-Sanjurjo A."/>
            <person name="Holton J.M."/>
            <person name="Cate J.H.D."/>
        </authorList>
    </citation>
    <scope>X-RAY CRYSTALLOGRAPHY (3.46 ANGSTROMS) OF 2 DIFFERENT RIBOSOME STRUCTURES</scope>
    <scope>SUBUNIT</scope>
    <source>
        <strain>MRE-600</strain>
    </source>
</reference>
<reference evidence="20 21" key="19">
    <citation type="journal article" date="2008" name="Mol. Cell">
        <title>Structural and functional analysis of the E. coli NusB-S10 transcription antitermination complex.</title>
        <authorList>
            <person name="Luo X."/>
            <person name="Hsiao H.H."/>
            <person name="Bubunenko M."/>
            <person name="Weber G."/>
            <person name="Court D.L."/>
            <person name="Gottesman M.E."/>
            <person name="Urlaub H."/>
            <person name="Wahl M.C."/>
        </authorList>
    </citation>
    <scope>X-RAY CRYSTALLOGRAPHY (1.30 ANGSTROMS) IN COMPLEX WITH NUSB</scope>
    <scope>FUNCTION</scope>
</reference>
<reference evidence="24" key="20">
    <citation type="journal article" date="2017" name="Nature">
        <title>Mechanistic insights into the alternative translation termination by ArfA and RF2.</title>
        <authorList>
            <person name="Ma C."/>
            <person name="Kurita D."/>
            <person name="Li N."/>
            <person name="Chen Y."/>
            <person name="Himeno H."/>
            <person name="Gao N."/>
        </authorList>
    </citation>
    <scope>STRUCTURE BY ELECTRON MICROSCOPY (3.0 ANGSTROMS) OF 70S RIBOSOME IN COMPLEX WITH ARFA AND RF2</scope>
    <scope>SUBUNIT</scope>
</reference>
<reference evidence="29" key="21">
    <citation type="journal article" date="2017" name="Nature">
        <title>Structural basis for ArfA-RF2-mediated translation termination on mRNAs lacking stop codons.</title>
        <authorList>
            <person name="Huter P."/>
            <person name="Mueller C."/>
            <person name="Beckert B."/>
            <person name="Arenz S."/>
            <person name="Berninghausen O."/>
            <person name="Beckmann R."/>
            <person name="Wilson D.N."/>
        </authorList>
    </citation>
    <scope>STRUCTURE BY ELECTRON MICROSCOPY (3.1 ANGSTROMS) OF 70S RIBOSOME IN COMPLEX WITH ARFA AND RF2</scope>
    <scope>SUBUNIT</scope>
</reference>
<reference evidence="25 26 27 28" key="22">
    <citation type="journal article" date="2016" name="Science">
        <title>Translational termination without a stop codon.</title>
        <authorList>
            <person name="James N.R."/>
            <person name="Brown A."/>
            <person name="Gordiyenko Y."/>
            <person name="Ramakrishnan V."/>
        </authorList>
    </citation>
    <scope>STRUCTURE BY ELECTRON MICROSCOPY (2.97 ANGSTROMS) OF 70S RIBOSOME IN COMPLEX WITH ARFA AND RF2</scope>
    <scope>SUBUNIT</scope>
</reference>
<reference evidence="30" key="23">
    <citation type="journal article" date="2017" name="Nature">
        <title>Structural basis of co-translational quality control by ArfA and RF2 bound to ribosome.</title>
        <authorList>
            <person name="Zeng F."/>
            <person name="Chen Y."/>
            <person name="Remis J."/>
            <person name="Shekhar M."/>
            <person name="Phillips J.C."/>
            <person name="Tajkhorshid E."/>
            <person name="Jin H."/>
        </authorList>
    </citation>
    <scope>STRUCTURE BY ELECTRON MICROSCOPY (3.52 ANGSTROMS) OF 70S RIBOSOME IN COMPLEX WITH ARFA AND RF2</scope>
    <scope>SUBUNIT</scope>
</reference>
<reference evidence="31 32" key="24">
    <citation type="journal article" date="2020" name="Mol. Cell">
        <title>Structure-Based Mechanisms of a Molecular RNA Polymerase/Chaperone Machine Required for Ribosome Biosynthesis.</title>
        <authorList>
            <person name="Huang Y.H."/>
            <person name="Hilal T."/>
            <person name="Loll B."/>
            <person name="Buerger J."/>
            <person name="Mielke T."/>
            <person name="Boettcher C."/>
            <person name="Said N."/>
            <person name="Wahl M.C."/>
        </authorList>
    </citation>
    <scope>STRUCTURE BY ELECTRON MICROSCOPY (3.80 ANGSTROMS) OF RRNA TRANSCRIPTION-ELONGATION-ANTITERMINATION COMPLEXES WITH AND WITHOUT S4</scope>
    <scope>FUNCTION</scope>
    <scope>SUBUNIT</scope>
</reference>
<comment type="function">
    <text evidence="3 6 9 14 15 17">Involved in the binding of tRNA to the ribosomes (PubMed:6759118). Part of the processive rRNA transcription and antitermination complex (rrnTAC). The complex forms an RNA-chaperone ring around the RNA exit tunnel of RNA polymerase (RNAP). It supports rapid transcription and antitermination of rRNA operons, cotranscriptional rRNA folding, and annealing of distal rRNA regions to allow correct ribosome biogenesis (PubMed:32871103). In complex with NusB is involved in the regulation of ribosomal RNA (rRNA) biosynthesis by transcriptional antitermination. S10 binds RNA non-specifically and increases the affinity of NusB for the boxA RNA sequence (PubMed:11884128, PubMed:16109710, PubMed:7678781). S10 may constitute the critical antitermination component of the NusB-S10 complex (PubMed:19111659).</text>
</comment>
<comment type="subunit">
    <text evidence="2 3 4 5 6 7 8 9 10 11 12 13 14 16">Part of the 30S ribosomal subunit (PubMed:10094780, PubMed:12244297, PubMed:12809609, PubMed:16272117, PubMed:27906160, PubMed:27906161, PubMed:27934701, PubMed:28077875, PubMed:7007073). Can also form a heterodimer with the transcription antitermination protein NusB (PubMed:11884128, PubMed:16109710, PubMed:1731086, PubMed:19111659). Binding of S10 to NusB is mutually exclusive with its incorporation into the ribosome (PubMed:19111659). The rRNA transcription and antitermination complex (rrnTAC) consists of RNAP, NusA, NusB, NusE (this protein), NusG, SubB, ribosomal protein S4, DNA and precursor rRNA; S4 is more flexible than other subunits (PubMed:32871103).</text>
</comment>
<comment type="interaction">
    <interactant intactId="EBI-544602">
        <id>P0A7R5</id>
    </interactant>
    <interactant intactId="EBI-555387">
        <id>P0A780</id>
        <label>nusB</label>
    </interactant>
    <organismsDiffer>false</organismsDiffer>
    <experiments>6</experiments>
</comment>
<comment type="interaction">
    <interactant intactId="EBI-544602">
        <id>P0A7R5</id>
    </interactant>
    <interactant intactId="EBI-557810">
        <id>P0AA43</id>
        <label>rsuA</label>
    </interactant>
    <organismsDiffer>false</organismsDiffer>
    <experiments>3</experiments>
</comment>
<comment type="mass spectrometry"/>
<comment type="similarity">
    <text evidence="1 19">Belongs to the universal ribosomal protein uS10 family.</text>
</comment>
<protein>
    <recommendedName>
        <fullName evidence="1 18">Small ribosomal subunit protein uS10</fullName>
    </recommendedName>
    <alternativeName>
        <fullName>30S ribosomal protein S10</fullName>
    </alternativeName>
    <alternativeName>
        <fullName evidence="19">Transcription termination/antitermination protein NusE</fullName>
    </alternativeName>
</protein>
<name>RS10_ECOLI</name>